<gene>
    <name type="primary">THAP1</name>
</gene>
<comment type="function">
    <text evidence="3 5 13">DNA-binding transcription regulator that regulates endothelial cell proliferation and G1/S cell-cycle progression. Specifically binds the 5'-[AT]NTNN[GT]GGCA[AGT]-3' core DNA sequence and acts by modulating expression of pRB-E2F cell-cycle target genes, including RRM1. Component of a THAP1/THAP3-HCFC1-OGT complex that is required for the regulation of the transcriptional activity of RRM1. May also have pro-apoptotic activity by potentiating both serum-withdrawal and TNF-induced apoptosis.</text>
</comment>
<comment type="subunit">
    <text evidence="3 12 13 27">Homodimer (PubMed:28299530). Interacts with PAWR. Component of a THAP1/THAP3-HCFC1-OGT complex that contains, either THAP1 or THAP3, HCFC1 and OGT. Interacts with OGT. Interacts (via the HBM) with HCFC1 (via the Kelch-repeat domain); the interaction recruits HCFC1 to the RRM1 promoter (PubMed:12717420, PubMed:20144952, PubMed:20200153).</text>
</comment>
<comment type="interaction">
    <interactant intactId="EBI-741515">
        <id>Q9NVV9</id>
    </interactant>
    <interactant intactId="EBI-16432404">
        <id>A0A0S2Z645</id>
        <label>ABCF3</label>
    </interactant>
    <organismsDiffer>false</organismsDiffer>
    <experiments>3</experiments>
</comment>
<comment type="interaction">
    <interactant intactId="EBI-741515">
        <id>Q9NVV9</id>
    </interactant>
    <interactant intactId="EBI-948905">
        <id>O00154</id>
        <label>ACOT7</label>
    </interactant>
    <organismsDiffer>false</organismsDiffer>
    <experiments>3</experiments>
</comment>
<comment type="interaction">
    <interactant intactId="EBI-741515">
        <id>Q9NVV9</id>
    </interactant>
    <interactant intactId="EBI-12007918">
        <id>O00154-4</id>
        <label>ACOT7</label>
    </interactant>
    <organismsDiffer>false</organismsDiffer>
    <experiments>3</experiments>
</comment>
<comment type="interaction">
    <interactant intactId="EBI-741515">
        <id>Q9NVV9</id>
    </interactant>
    <interactant intactId="EBI-1042725">
        <id>Q02040</id>
        <label>AKAP17A</label>
    </interactant>
    <organismsDiffer>false</organismsDiffer>
    <experiments>5</experiments>
</comment>
<comment type="interaction">
    <interactant intactId="EBI-741515">
        <id>Q9NVV9</id>
    </interactant>
    <interactant intactId="EBI-10222656">
        <id>Q02040-3</id>
        <label>AKAP17A</label>
    </interactant>
    <organismsDiffer>false</organismsDiffer>
    <experiments>3</experiments>
</comment>
<comment type="interaction">
    <interactant intactId="EBI-741515">
        <id>Q9NVV9</id>
    </interactant>
    <interactant intactId="EBI-9641546">
        <id>Q99996-2</id>
        <label>AKAP9</label>
    </interactant>
    <organismsDiffer>false</organismsDiffer>
    <experiments>3</experiments>
</comment>
<comment type="interaction">
    <interactant intactId="EBI-741515">
        <id>Q9NVV9</id>
    </interactant>
    <interactant intactId="EBI-432924">
        <id>P63010</id>
        <label>AP2B1</label>
    </interactant>
    <organismsDiffer>false</organismsDiffer>
    <experiments>4</experiments>
</comment>
<comment type="interaction">
    <interactant intactId="EBI-741515">
        <id>Q9NVV9</id>
    </interactant>
    <interactant intactId="EBI-10248982">
        <id>Q66PJ3-3</id>
        <label>ARL6IP4</label>
    </interactant>
    <organismsDiffer>false</organismsDiffer>
    <experiments>3</experiments>
</comment>
<comment type="interaction">
    <interactant intactId="EBI-741515">
        <id>Q9NVV9</id>
    </interactant>
    <interactant intactId="EBI-356517">
        <id>Q9UL15</id>
        <label>BAG5</label>
    </interactant>
    <organismsDiffer>false</organismsDiffer>
    <experiments>7</experiments>
</comment>
<comment type="interaction">
    <interactant intactId="EBI-741515">
        <id>Q9NVV9</id>
    </interactant>
    <interactant intactId="EBI-10181188">
        <id>Q8N7W2-2</id>
        <label>BEND7</label>
    </interactant>
    <organismsDiffer>false</organismsDiffer>
    <experiments>3</experiments>
</comment>
<comment type="interaction">
    <interactant intactId="EBI-741515">
        <id>Q9NVV9</id>
    </interactant>
    <interactant intactId="EBI-358049">
        <id>Q13895</id>
        <label>BYSL</label>
    </interactant>
    <organismsDiffer>false</organismsDiffer>
    <experiments>8</experiments>
</comment>
<comment type="interaction">
    <interactant intactId="EBI-741515">
        <id>Q9NVV9</id>
    </interactant>
    <interactant intactId="EBI-747505">
        <id>Q8TAB5</id>
        <label>C1orf216</label>
    </interactant>
    <organismsDiffer>false</organismsDiffer>
    <experiments>3</experiments>
</comment>
<comment type="interaction">
    <interactant intactId="EBI-741515">
        <id>Q9NVV9</id>
    </interactant>
    <interactant intactId="EBI-751612">
        <id>Q9BRJ6</id>
        <label>C7orf50</label>
    </interactant>
    <organismsDiffer>false</organismsDiffer>
    <experiments>6</experiments>
</comment>
<comment type="interaction">
    <interactant intactId="EBI-741515">
        <id>Q9NVV9</id>
    </interactant>
    <interactant intactId="EBI-295634">
        <id>Q16543</id>
        <label>CDC37</label>
    </interactant>
    <organismsDiffer>false</organismsDiffer>
    <experiments>3</experiments>
</comment>
<comment type="interaction">
    <interactant intactId="EBI-741515">
        <id>Q9NVV9</id>
    </interactant>
    <interactant intactId="EBI-519280">
        <id>P46527</id>
        <label>CDKN1B</label>
    </interactant>
    <organismsDiffer>false</organismsDiffer>
    <experiments>3</experiments>
</comment>
<comment type="interaction">
    <interactant intactId="EBI-741515">
        <id>Q9NVV9</id>
    </interactant>
    <interactant intactId="EBI-745859">
        <id>P55273</id>
        <label>CDKN2D</label>
    </interactant>
    <organismsDiffer>false</organismsDiffer>
    <experiments>3</experiments>
</comment>
<comment type="interaction">
    <interactant intactId="EBI-741515">
        <id>Q9NVV9</id>
    </interactant>
    <interactant intactId="EBI-1210503">
        <id>O14647</id>
        <label>CHD2</label>
    </interactant>
    <organismsDiffer>false</organismsDiffer>
    <experiments>3</experiments>
</comment>
<comment type="interaction">
    <interactant intactId="EBI-741515">
        <id>Q9NVV9</id>
    </interactant>
    <interactant intactId="EBI-347804">
        <id>P68400</id>
        <label>CSNK2A1</label>
    </interactant>
    <organismsDiffer>false</organismsDiffer>
    <experiments>7</experiments>
</comment>
<comment type="interaction">
    <interactant intactId="EBI-741515">
        <id>Q9NVV9</id>
    </interactant>
    <interactant intactId="EBI-740686">
        <id>Q5TAQ9</id>
        <label>DCAF8</label>
    </interactant>
    <organismsDiffer>false</organismsDiffer>
    <experiments>3</experiments>
</comment>
<comment type="interaction">
    <interactant intactId="EBI-741515">
        <id>Q9NVV9</id>
    </interactant>
    <interactant intactId="EBI-744506">
        <id>Q86V42</id>
        <label>FAM124A</label>
    </interactant>
    <organismsDiffer>false</organismsDiffer>
    <experiments>3</experiments>
</comment>
<comment type="interaction">
    <interactant intactId="EBI-741515">
        <id>Q9NVV9</id>
    </interactant>
    <interactant intactId="EBI-10268158">
        <id>Q8N9E0</id>
        <label>FAM133A</label>
    </interactant>
    <organismsDiffer>false</organismsDiffer>
    <experiments>6</experiments>
</comment>
<comment type="interaction">
    <interactant intactId="EBI-741515">
        <id>Q9NVV9</id>
    </interactant>
    <interactant intactId="EBI-8468186">
        <id>Q8IZU1</id>
        <label>FAM9A</label>
    </interactant>
    <organismsDiffer>false</organismsDiffer>
    <experiments>3</experiments>
</comment>
<comment type="interaction">
    <interactant intactId="EBI-741515">
        <id>Q9NVV9</id>
    </interactant>
    <interactant intactId="EBI-1035684">
        <id>O15520</id>
        <label>FGF10</label>
    </interactant>
    <organismsDiffer>false</organismsDiffer>
    <experiments>3</experiments>
</comment>
<comment type="interaction">
    <interactant intactId="EBI-741515">
        <id>Q9NVV9</id>
    </interactant>
    <interactant intactId="EBI-11987787">
        <id>Q92914</id>
        <label>FGF11</label>
    </interactant>
    <organismsDiffer>false</organismsDiffer>
    <experiments>3</experiments>
</comment>
<comment type="interaction">
    <interactant intactId="EBI-741515">
        <id>Q9NVV9</id>
    </interactant>
    <interactant intactId="EBI-10699759">
        <id>P61328-2</id>
        <label>FGF12</label>
    </interactant>
    <organismsDiffer>false</organismsDiffer>
    <experiments>3</experiments>
</comment>
<comment type="interaction">
    <interactant intactId="EBI-741515">
        <id>Q9NVV9</id>
    </interactant>
    <interactant intactId="EBI-1057431">
        <id>O14556</id>
        <label>GAPDHS</label>
    </interactant>
    <organismsDiffer>false</organismsDiffer>
    <experiments>2</experiments>
</comment>
<comment type="interaction">
    <interactant intactId="EBI-741515">
        <id>Q9NVV9</id>
    </interactant>
    <interactant intactId="EBI-1052570">
        <id>O95995</id>
        <label>GAS8</label>
    </interactant>
    <organismsDiffer>false</organismsDiffer>
    <experiments>3</experiments>
</comment>
<comment type="interaction">
    <interactant intactId="EBI-741515">
        <id>Q9NVV9</id>
    </interactant>
    <interactant intactId="EBI-744302">
        <id>P14136</id>
        <label>GFAP</label>
    </interactant>
    <organismsDiffer>false</organismsDiffer>
    <experiments>3</experiments>
</comment>
<comment type="interaction">
    <interactant intactId="EBI-741515">
        <id>Q9NVV9</id>
    </interactant>
    <interactant intactId="EBI-5666657">
        <id>Q9NWQ4</id>
        <label>GPATCH2L</label>
    </interactant>
    <organismsDiffer>false</organismsDiffer>
    <experiments>3</experiments>
</comment>
<comment type="interaction">
    <interactant intactId="EBI-741515">
        <id>Q9NVV9</id>
    </interactant>
    <interactant intactId="EBI-11959863">
        <id>Q9NWQ4-1</id>
        <label>GPATCH2L</label>
    </interactant>
    <organismsDiffer>false</organismsDiffer>
    <experiments>5</experiments>
</comment>
<comment type="interaction">
    <interactant intactId="EBI-741515">
        <id>Q9NVV9</id>
    </interactant>
    <interactant intactId="EBI-396176">
        <id>P51610</id>
        <label>HCFC1</label>
    </interactant>
    <organismsDiffer>false</organismsDiffer>
    <experiments>6</experiments>
</comment>
<comment type="interaction">
    <interactant intactId="EBI-741515">
        <id>Q9NVV9</id>
    </interactant>
    <interactant intactId="EBI-535849">
        <id>Q8WVV9</id>
        <label>HNRNPLL</label>
    </interactant>
    <organismsDiffer>false</organismsDiffer>
    <experiments>3</experiments>
</comment>
<comment type="interaction">
    <interactant intactId="EBI-741515">
        <id>Q9NVV9</id>
    </interactant>
    <interactant intactId="EBI-715611">
        <id>Q9C086</id>
        <label>INO80B</label>
    </interactant>
    <organismsDiffer>false</organismsDiffer>
    <experiments>3</experiments>
</comment>
<comment type="interaction">
    <interactant intactId="EBI-741515">
        <id>Q9NVV9</id>
    </interactant>
    <interactant intactId="EBI-2556193">
        <id>Q63ZY3</id>
        <label>KANK2</label>
    </interactant>
    <organismsDiffer>false</organismsDiffer>
    <experiments>3</experiments>
</comment>
<comment type="interaction">
    <interactant intactId="EBI-741515">
        <id>Q9NVV9</id>
    </interactant>
    <interactant intactId="EBI-750750">
        <id>Q9Y4X4</id>
        <label>KLF12</label>
    </interactant>
    <organismsDiffer>false</organismsDiffer>
    <experiments>3</experiments>
</comment>
<comment type="interaction">
    <interactant intactId="EBI-741515">
        <id>Q9NVV9</id>
    </interactant>
    <interactant intactId="EBI-10172290">
        <id>P60409</id>
        <label>KRTAP10-7</label>
    </interactant>
    <organismsDiffer>false</organismsDiffer>
    <experiments>3</experiments>
</comment>
<comment type="interaction">
    <interactant intactId="EBI-741515">
        <id>Q9NVV9</id>
    </interactant>
    <interactant intactId="EBI-739909">
        <id>Q969R5</id>
        <label>L3MBTL2</label>
    </interactant>
    <organismsDiffer>false</organismsDiffer>
    <experiments>3</experiments>
</comment>
<comment type="interaction">
    <interactant intactId="EBI-741515">
        <id>Q9NVV9</id>
    </interactant>
    <interactant intactId="EBI-742828">
        <id>Q14847</id>
        <label>LASP1</label>
    </interactant>
    <organismsDiffer>false</organismsDiffer>
    <experiments>3</experiments>
</comment>
<comment type="interaction">
    <interactant intactId="EBI-741515">
        <id>Q9NVV9</id>
    </interactant>
    <interactant intactId="EBI-2830427">
        <id>Q03252</id>
        <label>LMNB2</label>
    </interactant>
    <organismsDiffer>false</organismsDiffer>
    <experiments>3</experiments>
</comment>
<comment type="interaction">
    <interactant intactId="EBI-741515">
        <id>Q9NVV9</id>
    </interactant>
    <interactant intactId="EBI-11742507">
        <id>Q8TAP4-4</id>
        <label>LMO3</label>
    </interactant>
    <organismsDiffer>false</organismsDiffer>
    <experiments>3</experiments>
</comment>
<comment type="interaction">
    <interactant intactId="EBI-741515">
        <id>Q9NVV9</id>
    </interactant>
    <interactant intactId="EBI-739832">
        <id>Q8TBB1</id>
        <label>LNX1</label>
    </interactant>
    <organismsDiffer>false</organismsDiffer>
    <experiments>3</experiments>
</comment>
<comment type="interaction">
    <interactant intactId="EBI-741515">
        <id>Q9NVV9</id>
    </interactant>
    <interactant intactId="EBI-1053295">
        <id>Q8N6R0</id>
        <label>METTL13</label>
    </interactant>
    <organismsDiffer>false</organismsDiffer>
    <experiments>4</experiments>
</comment>
<comment type="interaction">
    <interactant intactId="EBI-741515">
        <id>Q9NVV9</id>
    </interactant>
    <interactant intactId="EBI-1048159">
        <id>P55081</id>
        <label>MFAP1</label>
    </interactant>
    <organismsDiffer>false</organismsDiffer>
    <experiments>3</experiments>
</comment>
<comment type="interaction">
    <interactant intactId="EBI-741515">
        <id>Q9NVV9</id>
    </interactant>
    <interactant intactId="EBI-1104552">
        <id>Q9NYP9</id>
        <label>MIS18A</label>
    </interactant>
    <organismsDiffer>false</organismsDiffer>
    <experiments>3</experiments>
</comment>
<comment type="interaction">
    <interactant intactId="EBI-741515">
        <id>Q9NVV9</id>
    </interactant>
    <interactant intactId="EBI-742459">
        <id>Q9BU76</id>
        <label>MMTAG2</label>
    </interactant>
    <organismsDiffer>false</organismsDiffer>
    <experiments>9</experiments>
</comment>
<comment type="interaction">
    <interactant intactId="EBI-741515">
        <id>Q9NVV9</id>
    </interactant>
    <interactant intactId="EBI-399246">
        <id>Q9UBU8</id>
        <label>MORF4L1</label>
    </interactant>
    <organismsDiffer>false</organismsDiffer>
    <experiments>3</experiments>
</comment>
<comment type="interaction">
    <interactant intactId="EBI-741515">
        <id>Q9NVV9</id>
    </interactant>
    <interactant intactId="EBI-399257">
        <id>Q15014</id>
        <label>MORF4L2</label>
    </interactant>
    <organismsDiffer>false</organismsDiffer>
    <experiments>3</experiments>
</comment>
<comment type="interaction">
    <interactant intactId="EBI-741515">
        <id>Q9NVV9</id>
    </interactant>
    <interactant intactId="EBI-5453723">
        <id>Q9Y3B7</id>
        <label>MRPL11</label>
    </interactant>
    <organismsDiffer>false</organismsDiffer>
    <experiments>4</experiments>
</comment>
<comment type="interaction">
    <interactant intactId="EBI-741515">
        <id>Q9NVV9</id>
    </interactant>
    <interactant intactId="EBI-2513715">
        <id>Q96EL3</id>
        <label>MRPL53</label>
    </interactant>
    <organismsDiffer>false</organismsDiffer>
    <experiments>3</experiments>
</comment>
<comment type="interaction">
    <interactant intactId="EBI-741515">
        <id>Q9NVV9</id>
    </interactant>
    <interactant intactId="EBI-1246261">
        <id>O14561</id>
        <label>NDUFAB1</label>
    </interactant>
    <organismsDiffer>false</organismsDiffer>
    <experiments>3</experiments>
</comment>
<comment type="interaction">
    <interactant intactId="EBI-741515">
        <id>Q9NVV9</id>
    </interactant>
    <interactant intactId="EBI-713665">
        <id>P19404</id>
        <label>NDUFV2</label>
    </interactant>
    <organismsDiffer>false</organismsDiffer>
    <experiments>3</experiments>
</comment>
<comment type="interaction">
    <interactant intactId="EBI-741515">
        <id>Q9NVV9</id>
    </interactant>
    <interactant intactId="EBI-3920396">
        <id>Q6ZUT1</id>
        <label>NKAPD1</label>
    </interactant>
    <organismsDiffer>false</organismsDiffer>
    <experiments>6</experiments>
</comment>
<comment type="interaction">
    <interactant intactId="EBI-741515">
        <id>Q9NVV9</id>
    </interactant>
    <interactant intactId="EBI-10180231">
        <id>Q6ZUT1-2</id>
        <label>NKAPD1</label>
    </interactant>
    <organismsDiffer>false</organismsDiffer>
    <experiments>3</experiments>
</comment>
<comment type="interaction">
    <interactant intactId="EBI-741515">
        <id>Q9NVV9</id>
    </interactant>
    <interactant intactId="EBI-1391623">
        <id>P29474</id>
        <label>NOS3</label>
    </interactant>
    <organismsDiffer>false</organismsDiffer>
    <experiments>3</experiments>
</comment>
<comment type="interaction">
    <interactant intactId="EBI-741515">
        <id>Q9NVV9</id>
    </interactant>
    <interactant intactId="EBI-741158">
        <id>Q96HA8</id>
        <label>NTAQ1</label>
    </interactant>
    <organismsDiffer>false</organismsDiffer>
    <experiments>8</experiments>
</comment>
<comment type="interaction">
    <interactant intactId="EBI-741515">
        <id>Q9NVV9</id>
    </interactant>
    <interactant intactId="EBI-347978">
        <id>P37198</id>
        <label>NUP62</label>
    </interactant>
    <organismsDiffer>false</organismsDiffer>
    <experiments>12</experiments>
</comment>
<comment type="interaction">
    <interactant intactId="EBI-741515">
        <id>Q9NVV9</id>
    </interactant>
    <interactant intactId="EBI-530034">
        <id>O43189</id>
        <label>PHF1</label>
    </interactant>
    <organismsDiffer>false</organismsDiffer>
    <experiments>4</experiments>
</comment>
<comment type="interaction">
    <interactant intactId="EBI-741515">
        <id>Q9NVV9</id>
    </interactant>
    <interactant intactId="EBI-2339674">
        <id>Q5T6S3</id>
        <label>PHF19</label>
    </interactant>
    <organismsDiffer>false</organismsDiffer>
    <experiments>3</experiments>
</comment>
<comment type="interaction">
    <interactant intactId="EBI-741515">
        <id>Q9NVV9</id>
    </interactant>
    <interactant intactId="EBI-10256685">
        <id>Q7Z2X4</id>
        <label>PID1</label>
    </interactant>
    <organismsDiffer>false</organismsDiffer>
    <experiments>3</experiments>
</comment>
<comment type="interaction">
    <interactant intactId="EBI-741515">
        <id>Q9NVV9</id>
    </interactant>
    <interactant intactId="EBI-50433196">
        <id>A0A6Q8PF08</id>
        <label>PMP22</label>
    </interactant>
    <organismsDiffer>false</organismsDiffer>
    <experiments>3</experiments>
</comment>
<comment type="interaction">
    <interactant intactId="EBI-741515">
        <id>Q9NVV9</id>
    </interactant>
    <interactant intactId="EBI-1045072">
        <id>Q96T60</id>
        <label>PNKP</label>
    </interactant>
    <organismsDiffer>false</organismsDiffer>
    <experiments>3</experiments>
</comment>
<comment type="interaction">
    <interactant intactId="EBI-741515">
        <id>Q9NVV9</id>
    </interactant>
    <interactant intactId="EBI-359527">
        <id>P62875</id>
        <label>POLR2L</label>
    </interactant>
    <organismsDiffer>false</organismsDiffer>
    <experiments>3</experiments>
</comment>
<comment type="interaction">
    <interactant intactId="EBI-741515">
        <id>Q9NVV9</id>
    </interactant>
    <interactant intactId="EBI-12029004">
        <id>P78424</id>
        <label>POU6F2</label>
    </interactant>
    <organismsDiffer>false</organismsDiffer>
    <experiments>3</experiments>
</comment>
<comment type="interaction">
    <interactant intactId="EBI-741515">
        <id>Q9NVV9</id>
    </interactant>
    <interactant intactId="EBI-396072">
        <id>Q13427</id>
        <label>PPIG</label>
    </interactant>
    <organismsDiffer>false</organismsDiffer>
    <experiments>3</experiments>
</comment>
<comment type="interaction">
    <interactant intactId="EBI-741515">
        <id>Q9NVV9</id>
    </interactant>
    <interactant intactId="EBI-1181405">
        <id>Q13131</id>
        <label>PRKAA1</label>
    </interactant>
    <organismsDiffer>false</organismsDiffer>
    <experiments>3</experiments>
</comment>
<comment type="interaction">
    <interactant intactId="EBI-741515">
        <id>Q9NVV9</id>
    </interactant>
    <interactant intactId="EBI-10172814">
        <id>P86479</id>
        <label>PRR20C</label>
    </interactant>
    <organismsDiffer>false</organismsDiffer>
    <experiments>3</experiments>
</comment>
<comment type="interaction">
    <interactant intactId="EBI-741515">
        <id>Q9NVV9</id>
    </interactant>
    <interactant intactId="EBI-12754095">
        <id>P86480</id>
        <label>PRR20D</label>
    </interactant>
    <organismsDiffer>false</organismsDiffer>
    <experiments>3</experiments>
</comment>
<comment type="interaction">
    <interactant intactId="EBI-741515">
        <id>Q9NVV9</id>
    </interactant>
    <interactant intactId="EBI-948156">
        <id>Q9Y4B4</id>
        <label>RAD54L2</label>
    </interactant>
    <organismsDiffer>false</organismsDiffer>
    <experiments>3</experiments>
</comment>
<comment type="interaction">
    <interactant intactId="EBI-741515">
        <id>Q9NVV9</id>
    </interactant>
    <interactant intactId="EBI-9512693">
        <id>Q53GL6</id>
        <label>RALY</label>
    </interactant>
    <organismsDiffer>false</organismsDiffer>
    <experiments>3</experiments>
</comment>
<comment type="interaction">
    <interactant intactId="EBI-741515">
        <id>Q9NVV9</id>
    </interactant>
    <interactant intactId="EBI-741520">
        <id>Q86SE5</id>
        <label>RALYL</label>
    </interactant>
    <organismsDiffer>false</organismsDiffer>
    <experiments>4</experiments>
</comment>
<comment type="interaction">
    <interactant intactId="EBI-741515">
        <id>Q9NVV9</id>
    </interactant>
    <interactant intactId="EBI-11526555">
        <id>Q86SE5-3</id>
        <label>RALYL</label>
    </interactant>
    <organismsDiffer>false</organismsDiffer>
    <experiments>6</experiments>
</comment>
<comment type="interaction">
    <interactant intactId="EBI-741515">
        <id>Q9NVV9</id>
    </interactant>
    <interactant intactId="EBI-721525">
        <id>P98175</id>
        <label>RBM10</label>
    </interactant>
    <organismsDiffer>false</organismsDiffer>
    <experiments>6</experiments>
</comment>
<comment type="interaction">
    <interactant intactId="EBI-741515">
        <id>Q9NVV9</id>
    </interactant>
    <interactant intactId="EBI-395290">
        <id>Q14498</id>
        <label>RBM39</label>
    </interactant>
    <organismsDiffer>false</organismsDiffer>
    <experiments>6</experiments>
</comment>
<comment type="interaction">
    <interactant intactId="EBI-741515">
        <id>Q9NVV9</id>
    </interactant>
    <interactant intactId="EBI-10226430">
        <id>Q0D2K3</id>
        <label>RIPPLY1</label>
    </interactant>
    <organismsDiffer>false</organismsDiffer>
    <experiments>6</experiments>
</comment>
<comment type="interaction">
    <interactant intactId="EBI-741515">
        <id>Q9NVV9</id>
    </interactant>
    <interactant intactId="EBI-2340927">
        <id>P78317</id>
        <label>RNF4</label>
    </interactant>
    <organismsDiffer>false</organismsDiffer>
    <experiments>3</experiments>
</comment>
<comment type="interaction">
    <interactant intactId="EBI-741515">
        <id>Q9NVV9</id>
    </interactant>
    <interactant intactId="EBI-354533">
        <id>P35268</id>
        <label>RPL22</label>
    </interactant>
    <organismsDiffer>false</organismsDiffer>
    <experiments>3</experiments>
</comment>
<comment type="interaction">
    <interactant intactId="EBI-741515">
        <id>Q9NVV9</id>
    </interactant>
    <interactant intactId="EBI-353054">
        <id>P62851</id>
        <label>RPS25</label>
    </interactant>
    <organismsDiffer>false</organismsDiffer>
    <experiments>3</experiments>
</comment>
<comment type="interaction">
    <interactant intactId="EBI-741515">
        <id>Q9NVV9</id>
    </interactant>
    <interactant intactId="EBI-751683">
        <id>Q9UHR5</id>
        <label>SAP30BP</label>
    </interactant>
    <organismsDiffer>false</organismsDiffer>
    <experiments>3</experiments>
</comment>
<comment type="interaction">
    <interactant intactId="EBI-741515">
        <id>Q9NVV9</id>
    </interactant>
    <interactant intactId="EBI-750559">
        <id>O95391</id>
        <label>SLU7</label>
    </interactant>
    <organismsDiffer>false</organismsDiffer>
    <experiments>3</experiments>
</comment>
<comment type="interaction">
    <interactant intactId="EBI-741515">
        <id>Q9NVV9</id>
    </interactant>
    <interactant intactId="EBI-12023934">
        <id>Q5MJ10</id>
        <label>SPANXN2</label>
    </interactant>
    <organismsDiffer>false</organismsDiffer>
    <experiments>3</experiments>
</comment>
<comment type="interaction">
    <interactant intactId="EBI-741515">
        <id>Q9NVV9</id>
    </interactant>
    <interactant intactId="EBI-12020542">
        <id>Q96LM5</id>
        <label>SPMIP2</label>
    </interactant>
    <organismsDiffer>false</organismsDiffer>
    <experiments>3</experiments>
</comment>
<comment type="interaction">
    <interactant intactId="EBI-741515">
        <id>Q9NVV9</id>
    </interactant>
    <interactant intactId="EBI-10268630">
        <id>Q8N9Q2</id>
        <label>SREK1IP1</label>
    </interactant>
    <organismsDiffer>false</organismsDiffer>
    <experiments>3</experiments>
</comment>
<comment type="interaction">
    <interactant intactId="EBI-741515">
        <id>Q9NVV9</id>
    </interactant>
    <interactant intactId="EBI-740355">
        <id>Q96SI9</id>
        <label>STRBP</label>
    </interactant>
    <organismsDiffer>false</organismsDiffer>
    <experiments>7</experiments>
</comment>
<comment type="interaction">
    <interactant intactId="EBI-741515">
        <id>Q9NVV9</id>
    </interactant>
    <interactant intactId="EBI-710310">
        <id>Q15560</id>
        <label>TCEA2</label>
    </interactant>
    <organismsDiffer>false</organismsDiffer>
    <experiments>6</experiments>
</comment>
<comment type="interaction">
    <interactant intactId="EBI-741515">
        <id>Q9NVV9</id>
    </interactant>
    <interactant intactId="EBI-11955057">
        <id>Q8N8B7-2</id>
        <label>TCEANC</label>
    </interactant>
    <organismsDiffer>false</organismsDiffer>
    <experiments>3</experiments>
</comment>
<comment type="interaction">
    <interactant intactId="EBI-741515">
        <id>Q9NVV9</id>
    </interactant>
    <interactant intactId="EBI-741515">
        <id>Q9NVV9</id>
        <label>THAP1</label>
    </interactant>
    <organismsDiffer>false</organismsDiffer>
    <experiments>9</experiments>
</comment>
<comment type="interaction">
    <interactant intactId="EBI-741515">
        <id>Q9NVV9</id>
    </interactant>
    <interactant intactId="EBI-355607">
        <id>P06753</id>
        <label>TPM3</label>
    </interactant>
    <organismsDiffer>false</organismsDiffer>
    <experiments>6</experiments>
</comment>
<comment type="interaction">
    <interactant intactId="EBI-741515">
        <id>Q9NVV9</id>
    </interactant>
    <interactant intactId="EBI-10184033">
        <id>Q5VU62</id>
        <label>TPM3</label>
    </interactant>
    <organismsDiffer>false</organismsDiffer>
    <experiments>3</experiments>
</comment>
<comment type="interaction">
    <interactant intactId="EBI-741515">
        <id>Q9NVV9</id>
    </interactant>
    <interactant intactId="EBI-523498">
        <id>O00463</id>
        <label>TRAF5</label>
    </interactant>
    <organismsDiffer>false</organismsDiffer>
    <experiments>6</experiments>
</comment>
<comment type="interaction">
    <interactant intactId="EBI-741515">
        <id>Q9NVV9</id>
    </interactant>
    <interactant intactId="EBI-2341136">
        <id>Q12899</id>
        <label>TRIM26</label>
    </interactant>
    <organismsDiffer>false</organismsDiffer>
    <experiments>6</experiments>
</comment>
<comment type="interaction">
    <interactant intactId="EBI-741515">
        <id>Q9NVV9</id>
    </interactant>
    <interactant intactId="EBI-6550597">
        <id>Q15642-2</id>
        <label>TRIP10</label>
    </interactant>
    <organismsDiffer>false</organismsDiffer>
    <experiments>3</experiments>
</comment>
<comment type="interaction">
    <interactant intactId="EBI-741515">
        <id>Q9NVV9</id>
    </interactant>
    <interactant intactId="EBI-7844656">
        <id>Q6ZVT0</id>
        <label>TTLL10</label>
    </interactant>
    <organismsDiffer>false</organismsDiffer>
    <experiments>3</experiments>
</comment>
<comment type="interaction">
    <interactant intactId="EBI-741515">
        <id>Q9NVV9</id>
    </interactant>
    <interactant intactId="EBI-742339">
        <id>P26368</id>
        <label>U2AF2</label>
    </interactant>
    <organismsDiffer>false</organismsDiffer>
    <experiments>4</experiments>
</comment>
<comment type="interaction">
    <interactant intactId="EBI-741515">
        <id>Q9NVV9</id>
    </interactant>
    <interactant intactId="EBI-10180829">
        <id>Q7KZS0</id>
        <label>UBE2I</label>
    </interactant>
    <organismsDiffer>false</organismsDiffer>
    <experiments>3</experiments>
</comment>
<comment type="interaction">
    <interactant intactId="EBI-741515">
        <id>Q9NVV9</id>
    </interactant>
    <interactant intactId="EBI-11983741">
        <id>Q3SXR9</id>
        <label>VCX2</label>
    </interactant>
    <organismsDiffer>false</organismsDiffer>
    <experiments>3</experiments>
</comment>
<comment type="interaction">
    <interactant intactId="EBI-741515">
        <id>Q9NVV9</id>
    </interactant>
    <interactant intactId="EBI-515331">
        <id>P07947</id>
        <label>YES1</label>
    </interactant>
    <organismsDiffer>false</organismsDiffer>
    <experiments>6</experiments>
</comment>
<comment type="interaction">
    <interactant intactId="EBI-741515">
        <id>Q9NVV9</id>
    </interactant>
    <interactant intactId="EBI-744864">
        <id>P10074</id>
        <label>ZBTB48</label>
    </interactant>
    <organismsDiffer>false</organismsDiffer>
    <experiments>3</experiments>
</comment>
<comment type="interaction">
    <interactant intactId="EBI-741515">
        <id>Q9NVV9</id>
    </interactant>
    <interactant intactId="EBI-597063">
        <id>Q8TBK6</id>
        <label>ZCCHC10</label>
    </interactant>
    <organismsDiffer>false</organismsDiffer>
    <experiments>10</experiments>
</comment>
<comment type="interaction">
    <interactant intactId="EBI-741515">
        <id>Q9NVV9</id>
    </interactant>
    <interactant intactId="EBI-10183064">
        <id>Q8N5A5-2</id>
        <label>ZGPAT</label>
    </interactant>
    <organismsDiffer>false</organismsDiffer>
    <experiments>3</experiments>
</comment>
<comment type="interaction">
    <interactant intactId="EBI-741515">
        <id>Q9NVV9</id>
    </interactant>
    <interactant intactId="EBI-8651919">
        <id>Q66K41</id>
        <label>ZNF385C</label>
    </interactant>
    <organismsDiffer>false</organismsDiffer>
    <experiments>4</experiments>
</comment>
<comment type="interaction">
    <interactant intactId="EBI-741515">
        <id>Q9NVV9</id>
    </interactant>
    <interactant intactId="EBI-12055653">
        <id>Q66K41-2</id>
        <label>ZNF385C</label>
    </interactant>
    <organismsDiffer>false</organismsDiffer>
    <experiments>3</experiments>
</comment>
<comment type="interaction">
    <interactant intactId="EBI-741515">
        <id>Q9NVV9</id>
    </interactant>
    <interactant intactId="EBI-347633">
        <id>Q9H9D4</id>
        <label>ZNF408</label>
    </interactant>
    <organismsDiffer>false</organismsDiffer>
    <experiments>4</experiments>
</comment>
<comment type="interaction">
    <interactant intactId="EBI-741515">
        <id>Q9NVV9</id>
    </interactant>
    <interactant intactId="EBI-11035148">
        <id>Q8TF50</id>
        <label>ZNF526</label>
    </interactant>
    <organismsDiffer>false</organismsDiffer>
    <experiments>3</experiments>
</comment>
<comment type="subcellular location">
    <subcellularLocation>
        <location evidence="3">Nucleus</location>
        <location evidence="3">Nucleoplasm</location>
    </subcellularLocation>
    <subcellularLocation>
        <location evidence="3">Nucleus</location>
        <location evidence="3">PML body</location>
    </subcellularLocation>
</comment>
<comment type="alternative products">
    <event type="alternative splicing"/>
    <isoform>
        <id>Q9NVV9-1</id>
        <name>1</name>
        <sequence type="displayed"/>
    </isoform>
    <isoform>
        <id>Q9NVV9-2</id>
        <name>2</name>
        <sequence type="described" ref="VSP_044665 VSP_044666"/>
    </isoform>
</comment>
<comment type="tissue specificity">
    <text evidence="13">Highly expressed in heart, skeletal muscle, kidney and liver. Weaker expression in brain and placenta.</text>
</comment>
<comment type="disease" evidence="7 8 9 10 11 14 15 16 17 18 19 20 21 22 23 24 25 26 27 28">
    <disease id="DI-00416">
        <name>Dystonia 6, torsion</name>
        <acronym>DYT6</acronym>
        <description>A primary torsion dystonia. Dystonia is defined by the presence of sustained involuntary muscle contractions, often leading to abnormal postures. Dystonia type 6 is characterized by onset in early adulthood, cranial or cervical involvement in about half of the cases, and frequent progression to involve multiple body regions.</description>
        <dbReference type="MIM" id="602629"/>
    </disease>
    <text>The disease is caused by variants affecting the gene represented in this entry.</text>
</comment>
<comment type="similarity">
    <text evidence="30">Belongs to the THAP1 family.</text>
</comment>
<protein>
    <recommendedName>
        <fullName>THAP domain-containing protein 1</fullName>
    </recommendedName>
</protein>
<proteinExistence type="evidence at protein level"/>
<accession>Q9NVV9</accession>
<accession>A6NCB6</accession>
<accession>D3DSY5</accession>
<accession>H9KV49</accession>
<accession>Q53FQ1</accession>
<accession>Q6IA99</accession>
<reference key="1">
    <citation type="journal article" date="2004" name="Nat. Genet.">
        <title>Complete sequencing and characterization of 21,243 full-length human cDNAs.</title>
        <authorList>
            <person name="Ota T."/>
            <person name="Suzuki Y."/>
            <person name="Nishikawa T."/>
            <person name="Otsuki T."/>
            <person name="Sugiyama T."/>
            <person name="Irie R."/>
            <person name="Wakamatsu A."/>
            <person name="Hayashi K."/>
            <person name="Sato H."/>
            <person name="Nagai K."/>
            <person name="Kimura K."/>
            <person name="Makita H."/>
            <person name="Sekine M."/>
            <person name="Obayashi M."/>
            <person name="Nishi T."/>
            <person name="Shibahara T."/>
            <person name="Tanaka T."/>
            <person name="Ishii S."/>
            <person name="Yamamoto J."/>
            <person name="Saito K."/>
            <person name="Kawai Y."/>
            <person name="Isono Y."/>
            <person name="Nakamura Y."/>
            <person name="Nagahari K."/>
            <person name="Murakami K."/>
            <person name="Yasuda T."/>
            <person name="Iwayanagi T."/>
            <person name="Wagatsuma M."/>
            <person name="Shiratori A."/>
            <person name="Sudo H."/>
            <person name="Hosoiri T."/>
            <person name="Kaku Y."/>
            <person name="Kodaira H."/>
            <person name="Kondo H."/>
            <person name="Sugawara M."/>
            <person name="Takahashi M."/>
            <person name="Kanda K."/>
            <person name="Yokoi T."/>
            <person name="Furuya T."/>
            <person name="Kikkawa E."/>
            <person name="Omura Y."/>
            <person name="Abe K."/>
            <person name="Kamihara K."/>
            <person name="Katsuta N."/>
            <person name="Sato K."/>
            <person name="Tanikawa M."/>
            <person name="Yamazaki M."/>
            <person name="Ninomiya K."/>
            <person name="Ishibashi T."/>
            <person name="Yamashita H."/>
            <person name="Murakawa K."/>
            <person name="Fujimori K."/>
            <person name="Tanai H."/>
            <person name="Kimata M."/>
            <person name="Watanabe M."/>
            <person name="Hiraoka S."/>
            <person name="Chiba Y."/>
            <person name="Ishida S."/>
            <person name="Ono Y."/>
            <person name="Takiguchi S."/>
            <person name="Watanabe S."/>
            <person name="Yosida M."/>
            <person name="Hotuta T."/>
            <person name="Kusano J."/>
            <person name="Kanehori K."/>
            <person name="Takahashi-Fujii A."/>
            <person name="Hara H."/>
            <person name="Tanase T.-O."/>
            <person name="Nomura Y."/>
            <person name="Togiya S."/>
            <person name="Komai F."/>
            <person name="Hara R."/>
            <person name="Takeuchi K."/>
            <person name="Arita M."/>
            <person name="Imose N."/>
            <person name="Musashino K."/>
            <person name="Yuuki H."/>
            <person name="Oshima A."/>
            <person name="Sasaki N."/>
            <person name="Aotsuka S."/>
            <person name="Yoshikawa Y."/>
            <person name="Matsunawa H."/>
            <person name="Ichihara T."/>
            <person name="Shiohata N."/>
            <person name="Sano S."/>
            <person name="Moriya S."/>
            <person name="Momiyama H."/>
            <person name="Satoh N."/>
            <person name="Takami S."/>
            <person name="Terashima Y."/>
            <person name="Suzuki O."/>
            <person name="Nakagawa S."/>
            <person name="Senoh A."/>
            <person name="Mizoguchi H."/>
            <person name="Goto Y."/>
            <person name="Shimizu F."/>
            <person name="Wakebe H."/>
            <person name="Hishigaki H."/>
            <person name="Watanabe T."/>
            <person name="Sugiyama A."/>
            <person name="Takemoto M."/>
            <person name="Kawakami B."/>
            <person name="Yamazaki M."/>
            <person name="Watanabe K."/>
            <person name="Kumagai A."/>
            <person name="Itakura S."/>
            <person name="Fukuzumi Y."/>
            <person name="Fujimori Y."/>
            <person name="Komiyama M."/>
            <person name="Tashiro H."/>
            <person name="Tanigami A."/>
            <person name="Fujiwara T."/>
            <person name="Ono T."/>
            <person name="Yamada K."/>
            <person name="Fujii Y."/>
            <person name="Ozaki K."/>
            <person name="Hirao M."/>
            <person name="Ohmori Y."/>
            <person name="Kawabata A."/>
            <person name="Hikiji T."/>
            <person name="Kobatake N."/>
            <person name="Inagaki H."/>
            <person name="Ikema Y."/>
            <person name="Okamoto S."/>
            <person name="Okitani R."/>
            <person name="Kawakami T."/>
            <person name="Noguchi S."/>
            <person name="Itoh T."/>
            <person name="Shigeta K."/>
            <person name="Senba T."/>
            <person name="Matsumura K."/>
            <person name="Nakajima Y."/>
            <person name="Mizuno T."/>
            <person name="Morinaga M."/>
            <person name="Sasaki M."/>
            <person name="Togashi T."/>
            <person name="Oyama M."/>
            <person name="Hata H."/>
            <person name="Watanabe M."/>
            <person name="Komatsu T."/>
            <person name="Mizushima-Sugano J."/>
            <person name="Satoh T."/>
            <person name="Shirai Y."/>
            <person name="Takahashi Y."/>
            <person name="Nakagawa K."/>
            <person name="Okumura K."/>
            <person name="Nagase T."/>
            <person name="Nomura N."/>
            <person name="Kikuchi H."/>
            <person name="Masuho Y."/>
            <person name="Yamashita R."/>
            <person name="Nakai K."/>
            <person name="Yada T."/>
            <person name="Nakamura Y."/>
            <person name="Ohara O."/>
            <person name="Isogai T."/>
            <person name="Sugano S."/>
        </authorList>
    </citation>
    <scope>NUCLEOTIDE SEQUENCE [LARGE SCALE MRNA] (ISOFORM 1)</scope>
</reference>
<reference key="2">
    <citation type="submission" date="2004-06" db="EMBL/GenBank/DDBJ databases">
        <title>Cloning of human full open reading frames in Gateway(TM) system entry vector (pDONR201).</title>
        <authorList>
            <person name="Ebert L."/>
            <person name="Schick M."/>
            <person name="Neubert P."/>
            <person name="Schatten R."/>
            <person name="Henze S."/>
            <person name="Korn B."/>
        </authorList>
    </citation>
    <scope>NUCLEOTIDE SEQUENCE [LARGE SCALE MRNA] (ISOFORM 1)</scope>
</reference>
<reference key="3">
    <citation type="submission" date="2005-04" db="EMBL/GenBank/DDBJ databases">
        <authorList>
            <person name="Suzuki Y."/>
            <person name="Sugano S."/>
            <person name="Totoki Y."/>
            <person name="Toyoda A."/>
            <person name="Takeda T."/>
            <person name="Sakaki Y."/>
            <person name="Tanaka A."/>
            <person name="Yokoyama S."/>
        </authorList>
    </citation>
    <scope>NUCLEOTIDE SEQUENCE [LARGE SCALE MRNA] (ISOFORM 1)</scope>
    <scope>VARIANT DYT6 ARG-89</scope>
    <source>
        <tissue>Gastric mucosa</tissue>
    </source>
</reference>
<reference key="4">
    <citation type="journal article" date="2007" name="BMC Genomics">
        <title>The full-ORF clone resource of the German cDNA consortium.</title>
        <authorList>
            <person name="Bechtel S."/>
            <person name="Rosenfelder H."/>
            <person name="Duda A."/>
            <person name="Schmidt C.P."/>
            <person name="Ernst U."/>
            <person name="Wellenreuther R."/>
            <person name="Mehrle A."/>
            <person name="Schuster C."/>
            <person name="Bahr A."/>
            <person name="Bloecker H."/>
            <person name="Heubner D."/>
            <person name="Hoerlein A."/>
            <person name="Michel G."/>
            <person name="Wedler H."/>
            <person name="Koehrer K."/>
            <person name="Ottenwaelder B."/>
            <person name="Poustka A."/>
            <person name="Wiemann S."/>
            <person name="Schupp I."/>
        </authorList>
    </citation>
    <scope>NUCLEOTIDE SEQUENCE [LARGE SCALE MRNA] (ISOFORM 2)</scope>
    <source>
        <tissue>Adipocyte</tissue>
    </source>
</reference>
<reference key="5">
    <citation type="journal article" date="2006" name="Nature">
        <title>DNA sequence and analysis of human chromosome 8.</title>
        <authorList>
            <person name="Nusbaum C."/>
            <person name="Mikkelsen T.S."/>
            <person name="Zody M.C."/>
            <person name="Asakawa S."/>
            <person name="Taudien S."/>
            <person name="Garber M."/>
            <person name="Kodira C.D."/>
            <person name="Schueler M.G."/>
            <person name="Shimizu A."/>
            <person name="Whittaker C.A."/>
            <person name="Chang J.L."/>
            <person name="Cuomo C.A."/>
            <person name="Dewar K."/>
            <person name="FitzGerald M.G."/>
            <person name="Yang X."/>
            <person name="Allen N.R."/>
            <person name="Anderson S."/>
            <person name="Asakawa T."/>
            <person name="Blechschmidt K."/>
            <person name="Bloom T."/>
            <person name="Borowsky M.L."/>
            <person name="Butler J."/>
            <person name="Cook A."/>
            <person name="Corum B."/>
            <person name="DeArellano K."/>
            <person name="DeCaprio D."/>
            <person name="Dooley K.T."/>
            <person name="Dorris L. III"/>
            <person name="Engels R."/>
            <person name="Gloeckner G."/>
            <person name="Hafez N."/>
            <person name="Hagopian D.S."/>
            <person name="Hall J.L."/>
            <person name="Ishikawa S.K."/>
            <person name="Jaffe D.B."/>
            <person name="Kamat A."/>
            <person name="Kudoh J."/>
            <person name="Lehmann R."/>
            <person name="Lokitsang T."/>
            <person name="Macdonald P."/>
            <person name="Major J.E."/>
            <person name="Matthews C.D."/>
            <person name="Mauceli E."/>
            <person name="Menzel U."/>
            <person name="Mihalev A.H."/>
            <person name="Minoshima S."/>
            <person name="Murayama Y."/>
            <person name="Naylor J.W."/>
            <person name="Nicol R."/>
            <person name="Nguyen C."/>
            <person name="O'Leary S.B."/>
            <person name="O'Neill K."/>
            <person name="Parker S.C.J."/>
            <person name="Polley A."/>
            <person name="Raymond C.K."/>
            <person name="Reichwald K."/>
            <person name="Rodriguez J."/>
            <person name="Sasaki T."/>
            <person name="Schilhabel M."/>
            <person name="Siddiqui R."/>
            <person name="Smith C.L."/>
            <person name="Sneddon T.P."/>
            <person name="Talamas J.A."/>
            <person name="Tenzin P."/>
            <person name="Topham K."/>
            <person name="Venkataraman V."/>
            <person name="Wen G."/>
            <person name="Yamazaki S."/>
            <person name="Young S.K."/>
            <person name="Zeng Q."/>
            <person name="Zimmer A.R."/>
            <person name="Rosenthal A."/>
            <person name="Birren B.W."/>
            <person name="Platzer M."/>
            <person name="Shimizu N."/>
            <person name="Lander E.S."/>
        </authorList>
    </citation>
    <scope>NUCLEOTIDE SEQUENCE [LARGE SCALE GENOMIC DNA]</scope>
</reference>
<reference key="6">
    <citation type="submission" date="2005-09" db="EMBL/GenBank/DDBJ databases">
        <authorList>
            <person name="Mural R.J."/>
            <person name="Istrail S."/>
            <person name="Sutton G.G."/>
            <person name="Florea L."/>
            <person name="Halpern A.L."/>
            <person name="Mobarry C.M."/>
            <person name="Lippert R."/>
            <person name="Walenz B."/>
            <person name="Shatkay H."/>
            <person name="Dew I."/>
            <person name="Miller J.R."/>
            <person name="Flanigan M.J."/>
            <person name="Edwards N.J."/>
            <person name="Bolanos R."/>
            <person name="Fasulo D."/>
            <person name="Halldorsson B.V."/>
            <person name="Hannenhalli S."/>
            <person name="Turner R."/>
            <person name="Yooseph S."/>
            <person name="Lu F."/>
            <person name="Nusskern D.R."/>
            <person name="Shue B.C."/>
            <person name="Zheng X.H."/>
            <person name="Zhong F."/>
            <person name="Delcher A.L."/>
            <person name="Huson D.H."/>
            <person name="Kravitz S.A."/>
            <person name="Mouchard L."/>
            <person name="Reinert K."/>
            <person name="Remington K.A."/>
            <person name="Clark A.G."/>
            <person name="Waterman M.S."/>
            <person name="Eichler E.E."/>
            <person name="Adams M.D."/>
            <person name="Hunkapiller M.W."/>
            <person name="Myers E.W."/>
            <person name="Venter J.C."/>
        </authorList>
    </citation>
    <scope>NUCLEOTIDE SEQUENCE [LARGE SCALE GENOMIC DNA]</scope>
</reference>
<reference key="7">
    <citation type="journal article" date="2004" name="Genome Res.">
        <title>The status, quality, and expansion of the NIH full-length cDNA project: the Mammalian Gene Collection (MGC).</title>
        <authorList>
            <consortium name="The MGC Project Team"/>
        </authorList>
    </citation>
    <scope>NUCLEOTIDE SEQUENCE [LARGE SCALE MRNA] (ISOFORM 1)</scope>
    <source>
        <tissue>Brain</tissue>
    </source>
</reference>
<reference key="8">
    <citation type="journal article" date="2003" name="Oncogene">
        <title>THAP1 is a nuclear proapoptotic factor that links prostate-apoptosis-response-4 (Par-4) to PML nuclear bodies.</title>
        <authorList>
            <person name="Roussigne M."/>
            <person name="Cayrol C."/>
            <person name="Clouaire T."/>
            <person name="Amalric F."/>
            <person name="Girard J.-P."/>
        </authorList>
    </citation>
    <scope>FUNCTION</scope>
    <scope>SUBCELLULAR LOCATION</scope>
    <scope>INTERACTION WITH PAWR</scope>
</reference>
<reference key="9">
    <citation type="journal article" date="2005" name="Proc. Natl. Acad. Sci. U.S.A.">
        <title>The THAP domain of THAP1 is a large C2CH module with zinc-dependent sequence-specific DNA-binding activity.</title>
        <authorList>
            <person name="Clouaire T."/>
            <person name="Roussigne M."/>
            <person name="Ecochard V."/>
            <person name="Mathe C."/>
            <person name="Amalric F."/>
            <person name="Girard J.-P."/>
        </authorList>
    </citation>
    <scope>DNA-BINDING</scope>
    <scope>ZINC-BINDING</scope>
    <scope>MUTAGENESIS OF CYS-5; CYS-10; PRO-26; TRP-36; CYS-54; HIS-57; PHE-58 AND PRO-78</scope>
</reference>
<reference key="10">
    <citation type="journal article" date="2007" name="Blood">
        <title>The THAP-zinc finger protein THAP1 regulates endothelial cell proliferation through modulation of pRB/E2F cell-cycle target genes.</title>
        <authorList>
            <person name="Cayrol C."/>
            <person name="Lacroix C."/>
            <person name="Mathe C."/>
            <person name="Ecochard V."/>
            <person name="Ceribelli M."/>
            <person name="Loreau E."/>
            <person name="Lazar V."/>
            <person name="Dessen P."/>
            <person name="Mantovani R."/>
            <person name="Aguilar L."/>
            <person name="Girard J.-P."/>
        </authorList>
    </citation>
    <scope>FUNCTION</scope>
    <scope>DNA-BINDING</scope>
</reference>
<reference key="11">
    <citation type="journal article" date="2010" name="J. Biol. Chem.">
        <title>The THAP-zinc finger protein THAP1 associates with coactivator HCF-1 and O-GlcNAc transferase: a link between DYT6 and DYT3 dystonias.</title>
        <authorList>
            <person name="Mazars R."/>
            <person name="Gonzalez-de-Peredo A."/>
            <person name="Cayrol C."/>
            <person name="Lavigne A.C."/>
            <person name="Vogel J.L."/>
            <person name="Ortega N."/>
            <person name="Lacroix C."/>
            <person name="Gautier V."/>
            <person name="Huet G."/>
            <person name="Ray A."/>
            <person name="Monsarrat B."/>
            <person name="Kristie T.M."/>
            <person name="Girard J.P."/>
        </authorList>
    </citation>
    <scope>IDENTIFICATION BY MASS SPECTROMETRY IN A THAP1/THAP3-HCFC1-OGT COMPLEX</scope>
    <scope>INTERACTION WITH HCFC1 AND OGT</scope>
    <scope>TISSUE SPECIFICITY</scope>
    <scope>FUNCTION</scope>
</reference>
<reference key="12">
    <citation type="journal article" date="2010" name="Nat. Struct. Mol. Biol.">
        <title>THAP proteins target specific DNA sites through bipartite recognition of adjacent major and minor grooves.</title>
        <authorList>
            <person name="Sabogal A."/>
            <person name="Lyubimov A.Y."/>
            <person name="Corn J.E."/>
            <person name="Berger J.M."/>
            <person name="Rio D.C."/>
        </authorList>
    </citation>
    <scope>DNA-BINDING</scope>
</reference>
<reference key="13">
    <citation type="journal article" date="2011" name="Hum. Mutat.">
        <title>DYT6 dystonia: review of the literature and creation of the UMD Locus-Specific Database (LSDB) for mutations in the THAP1 gene.</title>
        <authorList>
            <person name="Blanchard A."/>
            <person name="Ea V."/>
            <person name="Roubertie A."/>
            <person name="Martin M."/>
            <person name="Coquart C."/>
            <person name="Claustres M."/>
            <person name="Beroud C."/>
            <person name="Collod-Beroud G."/>
        </authorList>
    </citation>
    <scope>REVIEW ON VARIANTS</scope>
</reference>
<reference key="14">
    <citation type="journal article" date="2008" name="J. Biol. Chem.">
        <title>Structure-function analysis of the THAP zinc finger of THAP1, a large C2CH DNA-binding module linked to Rb/E2F pathways.</title>
        <authorList>
            <person name="Bessiere D."/>
            <person name="Lacroix C."/>
            <person name="Campagne S."/>
            <person name="Ecochard V."/>
            <person name="Guillet V."/>
            <person name="Mourey L."/>
            <person name="Lopez F."/>
            <person name="Czaplicki J."/>
            <person name="Demange P."/>
            <person name="Milon A."/>
            <person name="Girard J.-P."/>
            <person name="Gervais V."/>
        </authorList>
    </citation>
    <scope>STRUCTURE BY NMR OF 1-82</scope>
    <scope>MUTAGENESIS OF SER-4; CYS-5; SER-6; TYR-8; CYS-10; LYS-11; LYS-16; LYS-24; PRO-26; LEU-27; THR-28; ARG-29; PRO-30; SER-31; LEU-32; CYS-33; LYS-34; GLU-35; TRP-36; GLU-37; VAL-40; ARG-41; ARG-42; LYS-43; ASN-44; PHE-45; LYS-46; PRO-47; THR-48; TYR-50; SER-51; SER-52; CYS-54; SER-55; HIS-57; PHE-58 AND PRO-78</scope>
</reference>
<reference key="15">
    <citation type="journal article" date="2010" name="Nucleic Acids Res.">
        <title>Structural determinants of specific DNA-recognition by the THAP zinc finger.</title>
        <authorList>
            <person name="Campagne S."/>
            <person name="Saurel O."/>
            <person name="Gervais V."/>
            <person name="Milon A."/>
        </authorList>
    </citation>
    <scope>STRUCTURE BY NMR OF 1-82 IN COMPLEX WITH DNA</scope>
</reference>
<reference key="16">
    <citation type="journal article" date="2009" name="Lancet Neurol.">
        <title>Mutations in THAP1 (DYT6) in early-onset dystonia: a genetic screening study.</title>
        <authorList>
            <person name="Bressman S.B."/>
            <person name="Raymond D."/>
            <person name="Fuchs T."/>
            <person name="Heiman G.A."/>
            <person name="Ozelius L.J."/>
            <person name="Saunders-Pullman R."/>
        </authorList>
    </citation>
    <scope>VARIANTS DYT6 LYS-12; THR-21; PRO-29; THR-39; LEU-81 AND ARG-89</scope>
</reference>
<reference key="17">
    <citation type="journal article" date="2009" name="Mov. Disord.">
        <title>Mutation screening of the DYT6/THAP1 gene in Italy.</title>
        <authorList>
            <person name="Bonetti M."/>
            <person name="Barzaghi C."/>
            <person name="Brancati F."/>
            <person name="Ferraris A."/>
            <person name="Bellacchio E."/>
            <person name="Giovanetti A."/>
            <person name="Ialongo T."/>
            <person name="Zorzi G."/>
            <person name="Piano C."/>
            <person name="Petracca M."/>
            <person name="Albanese A."/>
            <person name="Nardocci N."/>
            <person name="Dallapiccola B."/>
            <person name="Bentivoglio A.R."/>
            <person name="Garavaglia B."/>
            <person name="Valente E.M."/>
        </authorList>
    </citation>
    <scope>VARIANT DYT6 ARG-170</scope>
</reference>
<reference key="18">
    <citation type="journal article" date="2009" name="Mov. Disord.">
        <title>Identification of a novel THAP1 mutation at R29 amino-acid residue in sporadic patients with early-onset dystonia.</title>
        <authorList>
            <person name="Paisan-Ruiz C."/>
            <person name="Ruiz-Martinez J."/>
            <person name="Ruibal M."/>
            <person name="Mok K.Y."/>
            <person name="Indakoetxea B."/>
            <person name="Gorostidi A."/>
            <person name="Masso J.F."/>
        </authorList>
    </citation>
    <scope>VARIANT DYT6 GLN-29</scope>
</reference>
<reference key="19">
    <citation type="journal article" date="2009" name="Nat. Genet.">
        <title>Mutations in the THAP1 gene are responsible for DYT6 primary torsion dystonia.</title>
        <authorList>
            <person name="Fuchs T."/>
            <person name="Gavarini S."/>
            <person name="Saunders-Pullman R."/>
            <person name="Raymond D."/>
            <person name="Ehrlich M.E."/>
            <person name="Bressman S.B."/>
            <person name="Ozelius L.J."/>
        </authorList>
    </citation>
    <scope>VARIANT DYT6 LEU-81</scope>
    <scope>DNA-BINDING</scope>
</reference>
<reference key="20">
    <citation type="journal article" date="2010" name="Mov. Disord.">
        <title>Adult-onset leg dystonia due to a missense mutation in THAP1.</title>
        <authorList>
            <person name="Van Gerpen J.A."/>
            <person name="Ledoux M.S."/>
            <person name="Wszolek Z.K."/>
        </authorList>
    </citation>
    <scope>VARIANT DYT6 THR-149</scope>
</reference>
<reference key="21">
    <citation type="journal article" date="2010" name="Mov. Disord.">
        <title>Prevalence of THAP1 sequence variants in German patients with primary dystonia.</title>
        <authorList>
            <person name="Sohn A.S."/>
            <person name="Glockle N."/>
            <person name="Doetzer A.D."/>
            <person name="Deuschl G."/>
            <person name="Felbor U."/>
            <person name="Topka H.R."/>
            <person name="Schols L."/>
            <person name="Riess O."/>
            <person name="Bauer P."/>
            <person name="Muller U."/>
            <person name="Grundmann K."/>
        </authorList>
    </citation>
    <scope>VARIANTS DYT6 ASN-57; ARG-83; CYS-137; VAL-143 AND ASN-192</scope>
</reference>
<reference key="22">
    <citation type="journal article" date="2010" name="Mov. Disord.">
        <title>DYT6 dystonia: mutation screening, phenotype, and response to deep brain stimulation.</title>
        <authorList>
            <person name="Groen J.L."/>
            <person name="Ritz K."/>
            <person name="Contarino M.F."/>
            <person name="van de Warrenburg B.P."/>
            <person name="Aramideh M."/>
            <person name="Foncke E.M."/>
            <person name="van Hilten J.J."/>
            <person name="Schuurman P.R."/>
            <person name="Speelman J.D."/>
            <person name="Koelman J.H."/>
            <person name="de Bie R.M."/>
            <person name="Baas F."/>
            <person name="Tijssen M.A."/>
        </authorList>
    </citation>
    <scope>VARIANTS DYT6 ILE-59; ASN-69 DEL AND LYS-136</scope>
</reference>
<reference key="23">
    <citation type="journal article" date="2010" name="Neurology">
        <title>Novel THAP1 sequence variants in primary dystonia.</title>
        <authorList>
            <person name="Xiao J."/>
            <person name="Zhao Y."/>
            <person name="Bastian R.W."/>
            <person name="Perlmutter J.S."/>
            <person name="Racette B.A."/>
            <person name="Tabbal S.D."/>
            <person name="Karimi M."/>
            <person name="Paniello R.C."/>
            <person name="Wszolek Z.K."/>
            <person name="Uitti R.J."/>
            <person name="Van Gerpen J.A."/>
            <person name="Simon D.K."/>
            <person name="Tarsy D."/>
            <person name="Hedera P."/>
            <person name="Truong D.D."/>
            <person name="Frei K.P."/>
            <person name="Dev Batish S."/>
            <person name="Blitzer A."/>
            <person name="Pfeiffer R.F."/>
            <person name="Gong S."/>
            <person name="LeDoux M.S."/>
        </authorList>
    </citation>
    <scope>VARIANTS DYT6 CYS-9; GLY-17; SER-132; THR-149; THR-166 AND LYS-187</scope>
</reference>
<reference key="24">
    <citation type="journal article" date="2010" name="Neurology">
        <title>THAP1 mutations (DYT6) are an additional cause of early-onset dystonia.</title>
        <authorList>
            <person name="Houlden H."/>
            <person name="Schneider S.A."/>
            <person name="Paudel R."/>
            <person name="Melchers A."/>
            <person name="Schwingenschuh P."/>
            <person name="Edwards M."/>
            <person name="Hardy J."/>
            <person name="Bhatia K.P."/>
        </authorList>
    </citation>
    <scope>VARIANTS DYT6 PHE-6; CYS-8; ARG-26; SER-136 AND GLN-169</scope>
</reference>
<reference key="25">
    <citation type="journal article" date="2012" name="Eur. J. Hum. Genet.">
        <title>Identification and functional analysis of novel THAP1 mutations.</title>
        <authorList>
            <person name="Lohmann K."/>
            <person name="Uflacker N."/>
            <person name="Erogullari A."/>
            <person name="Lohnau T."/>
            <person name="Winkler S."/>
            <person name="Dendorfer A."/>
            <person name="Schneider S.A."/>
            <person name="Osmanovic A."/>
            <person name="Svetel M."/>
            <person name="Ferbert A."/>
            <person name="Zittel S."/>
            <person name="Kuhn A.A."/>
            <person name="Schmidt A."/>
            <person name="Altenmuller E."/>
            <person name="Munchau A."/>
            <person name="Kamm C."/>
            <person name="Wittstock M."/>
            <person name="Kupsch A."/>
            <person name="Moro E."/>
            <person name="Volkmann J."/>
            <person name="Kostic V."/>
            <person name="Kaiser F.J."/>
            <person name="Klein C."/>
            <person name="Bruggemann N."/>
        </authorList>
    </citation>
    <scope>VARIANTS DYT6 HIS-13; GLU-16; PRO-23; GLU-24; LEU-26 AND VAL-80</scope>
    <scope>CHARACTERIZATION OF VARIANTS DYT6 HIS-13; GLU-16; PRO-23; GLU-24; LEU-26 AND VAL-80</scope>
</reference>
<reference key="26">
    <citation type="journal article" date="2011" name="Eur. J. Neurol.">
        <title>Clinical and genetic evaluation of DYT1 and DYT6 primary dystonia in China.</title>
        <authorList>
            <person name="Cheng F.B."/>
            <person name="Wan X.H."/>
            <person name="Feng J.C."/>
            <person name="Wang L."/>
            <person name="Yang Y.M."/>
            <person name="Cui L.Y."/>
        </authorList>
    </citation>
    <scope>VARIANTS DYT6 ILE-75 AND PRO-150</scope>
</reference>
<reference key="27">
    <citation type="journal article" date="2012" name="J. Neurol.">
        <title>THAP1/DYT6 sequence variants in non-DYT1 early-onset primary dystonia in China and their effects on RNA expression.</title>
        <authorList>
            <person name="Cheng F.B."/>
            <person name="Ozelius L.J."/>
            <person name="Wan X.H."/>
            <person name="Feng J.C."/>
            <person name="Ma L.Y."/>
            <person name="Yang Y.M."/>
            <person name="Wang L."/>
        </authorList>
    </citation>
    <scope>VARIANTS DYT6 PHE-54; ILE-75; PRO-150 AND SER-180</scope>
</reference>
<reference key="28">
    <citation type="journal article" date="2011" name="J. Neurol. Sci.">
        <title>Novel THAP1 gene mutations in patients with primary dystonia from Southwest China.</title>
        <authorList>
            <person name="Song W."/>
            <person name="Chen Y."/>
            <person name="Huang R."/>
            <person name="Chen K."/>
            <person name="Pan P."/>
            <person name="Yang Y."/>
            <person name="Shang H.F."/>
        </authorList>
    </citation>
    <scope>VARIANT DYT6 GLY-174</scope>
</reference>
<reference key="29">
    <citation type="journal article" date="2011" name="Mov. Disord.">
        <title>Homozygous THAP1 mutations as cause of early-onset generalized dystonia.</title>
        <authorList>
            <person name="Schneider S.A."/>
            <person name="Ramirez A."/>
            <person name="Shafiee K."/>
            <person name="Kaiser F.J."/>
            <person name="Erogullari A."/>
            <person name="Bruggemann N."/>
            <person name="Winkler S."/>
            <person name="Bahman I."/>
            <person name="Osmanovic A."/>
            <person name="Shafa M.A."/>
            <person name="Bhatia K.P."/>
            <person name="Najmabadi H."/>
            <person name="Klein C."/>
            <person name="Lohmann K."/>
        </authorList>
    </citation>
    <scope>VARIANT DYT6 HIS-32</scope>
    <scope>CHARACTERIZATION OF VARIANT DYT6 HIS-32</scope>
</reference>
<reference key="30">
    <citation type="journal article" date="2011" name="Mov. Disord.">
        <title>DYT 6--a novel THAP1 mutation with excellent effect on pallidal DBS.</title>
        <authorList>
            <person name="Jech R."/>
            <person name="Bares M."/>
            <person name="Krepelova A."/>
            <person name="Urgosik D."/>
            <person name="Havrankova P."/>
            <person name="Ruzicka E."/>
        </authorList>
    </citation>
    <scope>VARIANT DYT6 ARG-30</scope>
</reference>
<reference key="31">
    <citation type="journal article" date="2011" name="Neurogenetics">
        <title>Screening of the THAP1 gene in patients with early-onset dystonia: myoclonic jerks are part of the dystonia 6 phenotype.</title>
        <authorList>
            <person name="Clot F."/>
            <person name="Grabli D."/>
            <person name="Burbaud P."/>
            <person name="Aya M."/>
            <person name="Derkinderen P."/>
            <person name="Defebvre L."/>
            <person name="Damier P."/>
            <person name="Krystkowiak P."/>
            <person name="Pollak P."/>
            <person name="Leguern E."/>
            <person name="San C."/>
            <person name="Camuzat A."/>
            <person name="Roze E."/>
            <person name="Vidailhet M."/>
            <person name="Durr A."/>
            <person name="Brice A."/>
        </authorList>
    </citation>
    <scope>VARIANTS DYT6 PRO-6; ASN-69 DEL AND ARG-72</scope>
</reference>
<reference key="32">
    <citation type="journal article" date="2012" name="Parkinsonism Relat. Disord.">
        <title>Genotype-phenotype correlations in THAP1 dystonia: Molecular foundations and description of new cases.</title>
        <authorList>
            <person name="Ledoux M.S."/>
            <person name="Xiao J."/>
            <person name="Rudzinska M."/>
            <person name="Bastian R.W."/>
            <person name="Wszolek Z.K."/>
            <person name="Van Gerpen J.A."/>
            <person name="Puschmann A."/>
            <person name="Momcilovic D."/>
            <person name="Vemula S.R."/>
            <person name="Zhao Y."/>
        </authorList>
    </citation>
    <scope>VARIANTS DYT6 ASP-7; GLU-16; CYS-21; GLN-29 AND VAL-80</scope>
</reference>
<reference key="33">
    <citation type="journal article" date="2015" name="Int. J. Neurosci.">
        <title>High variability of clinical symptoms in a Polish family with a novel THAP1 mutation.</title>
        <authorList>
            <person name="Gajos A."/>
            <person name="Golanska E."/>
            <person name="Sieruta M."/>
            <person name="Szybka M."/>
            <person name="Liberski P.P."/>
            <person name="Bogucki A."/>
        </authorList>
    </citation>
    <scope>VARIANT DYT6 GLY-56</scope>
</reference>
<reference key="34">
    <citation type="journal article" date="2017" name="J. Mol. Neurosci.">
        <title>In-depth Characterization of the Homodimerization Domain of the Transcription Factor THAP1 and Dystonia-Causing Mutations Therein.</title>
        <authorList>
            <person name="Richter A."/>
            <person name="Hollstein R."/>
            <person name="Hebert E."/>
            <person name="Vulinovic F."/>
            <person name="Eckhold J."/>
            <person name="Osmanovic A."/>
            <person name="Depping R."/>
            <person name="Kaiser F.J."/>
            <person name="Lohmann K."/>
        </authorList>
    </citation>
    <scope>SUBUNIT</scope>
    <scope>REGION</scope>
    <scope>VARIANTS DYT6 VAL-143; THR-149; PRO-150; THR-166; GLN-169; ARG-170; GLY-174; PRO-177 AND SER-180</scope>
    <scope>CHARACTERIZATION OF VARIANTS DYT6 THR-149; PRO-150; THR-166; GLN-169; ARG-170; GLY-174; PRO-177 AND SER-180</scope>
</reference>
<dbReference type="EMBL" id="AK001339">
    <property type="protein sequence ID" value="BAA91635.1"/>
    <property type="molecule type" value="mRNA"/>
</dbReference>
<dbReference type="EMBL" id="CR457256">
    <property type="protein sequence ID" value="CAG33537.1"/>
    <property type="molecule type" value="mRNA"/>
</dbReference>
<dbReference type="EMBL" id="AK223231">
    <property type="protein sequence ID" value="BAD96951.1"/>
    <property type="molecule type" value="mRNA"/>
</dbReference>
<dbReference type="EMBL" id="AL832077">
    <property type="status" value="NOT_ANNOTATED_CDS"/>
    <property type="molecule type" value="mRNA"/>
</dbReference>
<dbReference type="EMBL" id="AC087533">
    <property type="status" value="NOT_ANNOTATED_CDS"/>
    <property type="molecule type" value="Genomic_DNA"/>
</dbReference>
<dbReference type="EMBL" id="CH471080">
    <property type="protein sequence ID" value="EAW63205.1"/>
    <property type="molecule type" value="Genomic_DNA"/>
</dbReference>
<dbReference type="EMBL" id="CH471080">
    <property type="protein sequence ID" value="EAW63206.1"/>
    <property type="molecule type" value="Genomic_DNA"/>
</dbReference>
<dbReference type="EMBL" id="BC021721">
    <property type="protein sequence ID" value="AAH21721.1"/>
    <property type="molecule type" value="mRNA"/>
</dbReference>
<dbReference type="CCDS" id="CCDS6136.1">
    <molecule id="Q9NVV9-1"/>
</dbReference>
<dbReference type="CCDS" id="CCDS6137.1">
    <molecule id="Q9NVV9-2"/>
</dbReference>
<dbReference type="RefSeq" id="NP_060575.1">
    <molecule id="Q9NVV9-1"/>
    <property type="nucleotide sequence ID" value="NM_018105.3"/>
</dbReference>
<dbReference type="RefSeq" id="NP_945354.1">
    <molecule id="Q9NVV9-2"/>
    <property type="nucleotide sequence ID" value="NM_199003.2"/>
</dbReference>
<dbReference type="PDB" id="2JTG">
    <property type="method" value="NMR"/>
    <property type="chains" value="A=1-81"/>
</dbReference>
<dbReference type="PDB" id="2KO0">
    <property type="method" value="NMR"/>
    <property type="chains" value="A=1-82"/>
</dbReference>
<dbReference type="PDB" id="2L1G">
    <property type="method" value="NMR"/>
    <property type="chains" value="A=1-82"/>
</dbReference>
<dbReference type="PDBsum" id="2JTG"/>
<dbReference type="PDBsum" id="2KO0"/>
<dbReference type="PDBsum" id="2L1G"/>
<dbReference type="BMRB" id="Q9NVV9"/>
<dbReference type="SMR" id="Q9NVV9"/>
<dbReference type="BioGRID" id="120448">
    <property type="interactions" value="128"/>
</dbReference>
<dbReference type="ELM" id="Q9NVV9"/>
<dbReference type="FunCoup" id="Q9NVV9">
    <property type="interactions" value="3850"/>
</dbReference>
<dbReference type="IntAct" id="Q9NVV9">
    <property type="interactions" value="108"/>
</dbReference>
<dbReference type="MINT" id="Q9NVV9"/>
<dbReference type="STRING" id="9606.ENSP00000254250"/>
<dbReference type="DrugCentral" id="Q9NVV9"/>
<dbReference type="iPTMnet" id="Q9NVV9"/>
<dbReference type="PhosphoSitePlus" id="Q9NVV9"/>
<dbReference type="BioMuta" id="THAP1"/>
<dbReference type="DMDM" id="29839656"/>
<dbReference type="jPOST" id="Q9NVV9"/>
<dbReference type="MassIVE" id="Q9NVV9"/>
<dbReference type="PaxDb" id="9606-ENSP00000254250"/>
<dbReference type="PeptideAtlas" id="Q9NVV9"/>
<dbReference type="ProteomicsDB" id="46208"/>
<dbReference type="ProteomicsDB" id="82871">
    <molecule id="Q9NVV9-1"/>
</dbReference>
<dbReference type="ABCD" id="Q9NVV9">
    <property type="antibodies" value="1 sequenced antibody"/>
</dbReference>
<dbReference type="Antibodypedia" id="24159">
    <property type="antibodies" value="135 antibodies from 27 providers"/>
</dbReference>
<dbReference type="DNASU" id="55145"/>
<dbReference type="Ensembl" id="ENST00000254250.7">
    <molecule id="Q9NVV9-1"/>
    <property type="protein sequence ID" value="ENSP00000254250.3"/>
    <property type="gene ID" value="ENSG00000131931.8"/>
</dbReference>
<dbReference type="Ensembl" id="ENST00000345117.2">
    <molecule id="Q9NVV9-2"/>
    <property type="protein sequence ID" value="ENSP00000344966.2"/>
    <property type="gene ID" value="ENSG00000131931.8"/>
</dbReference>
<dbReference type="GeneID" id="55145"/>
<dbReference type="KEGG" id="hsa:55145"/>
<dbReference type="MANE-Select" id="ENST00000254250.7">
    <property type="protein sequence ID" value="ENSP00000254250.3"/>
    <property type="RefSeq nucleotide sequence ID" value="NM_018105.3"/>
    <property type="RefSeq protein sequence ID" value="NP_060575.1"/>
</dbReference>
<dbReference type="UCSC" id="uc003xpk.4">
    <molecule id="Q9NVV9-1"/>
    <property type="organism name" value="human"/>
</dbReference>
<dbReference type="AGR" id="HGNC:20856"/>
<dbReference type="CTD" id="55145"/>
<dbReference type="DisGeNET" id="55145"/>
<dbReference type="GeneCards" id="THAP1"/>
<dbReference type="HGNC" id="HGNC:20856">
    <property type="gene designation" value="THAP1"/>
</dbReference>
<dbReference type="HPA" id="ENSG00000131931">
    <property type="expression patterns" value="Low tissue specificity"/>
</dbReference>
<dbReference type="MalaCards" id="THAP1"/>
<dbReference type="MIM" id="602629">
    <property type="type" value="phenotype"/>
</dbReference>
<dbReference type="MIM" id="609520">
    <property type="type" value="gene"/>
</dbReference>
<dbReference type="neXtProt" id="NX_Q9NVV9"/>
<dbReference type="OpenTargets" id="ENSG00000131931"/>
<dbReference type="Orphanet" id="98806">
    <property type="disease" value="Primary dystonia, DYT6 type"/>
</dbReference>
<dbReference type="PharmGKB" id="PA134920361"/>
<dbReference type="VEuPathDB" id="HostDB:ENSG00000131931"/>
<dbReference type="eggNOG" id="KOG1721">
    <property type="taxonomic scope" value="Eukaryota"/>
</dbReference>
<dbReference type="GeneTree" id="ENSGT00940000159383"/>
<dbReference type="HOGENOM" id="CLU_076186_2_1_1"/>
<dbReference type="InParanoid" id="Q9NVV9"/>
<dbReference type="OMA" id="TKDCFKR"/>
<dbReference type="OrthoDB" id="9867479at2759"/>
<dbReference type="PAN-GO" id="Q9NVV9">
    <property type="GO annotations" value="4 GO annotations based on evolutionary models"/>
</dbReference>
<dbReference type="PhylomeDB" id="Q9NVV9"/>
<dbReference type="TreeFam" id="TF330127"/>
<dbReference type="PathwayCommons" id="Q9NVV9"/>
<dbReference type="SignaLink" id="Q9NVV9"/>
<dbReference type="BioGRID-ORCS" id="55145">
    <property type="hits" value="694 hits in 1187 CRISPR screens"/>
</dbReference>
<dbReference type="CD-CODE" id="B5B9A610">
    <property type="entry name" value="PML body"/>
</dbReference>
<dbReference type="ChiTaRS" id="THAP1">
    <property type="organism name" value="human"/>
</dbReference>
<dbReference type="EvolutionaryTrace" id="Q9NVV9"/>
<dbReference type="GeneWiki" id="THAP1"/>
<dbReference type="GenomeRNAi" id="55145"/>
<dbReference type="Pharos" id="Q9NVV9">
    <property type="development level" value="Tbio"/>
</dbReference>
<dbReference type="PRO" id="PR:Q9NVV9"/>
<dbReference type="Proteomes" id="UP000005640">
    <property type="component" value="Chromosome 8"/>
</dbReference>
<dbReference type="RNAct" id="Q9NVV9">
    <property type="molecule type" value="protein"/>
</dbReference>
<dbReference type="Bgee" id="ENSG00000131931">
    <property type="expression patterns" value="Expressed in secondary oocyte and 178 other cell types or tissues"/>
</dbReference>
<dbReference type="ExpressionAtlas" id="Q9NVV9">
    <property type="expression patterns" value="baseline and differential"/>
</dbReference>
<dbReference type="GO" id="GO:0000785">
    <property type="term" value="C:chromatin"/>
    <property type="evidence" value="ECO:0000247"/>
    <property type="project" value="NTNU_SB"/>
</dbReference>
<dbReference type="GO" id="GO:0001650">
    <property type="term" value="C:fibrillar center"/>
    <property type="evidence" value="ECO:0000314"/>
    <property type="project" value="HPA"/>
</dbReference>
<dbReference type="GO" id="GO:0043231">
    <property type="term" value="C:intracellular membrane-bounded organelle"/>
    <property type="evidence" value="ECO:0000314"/>
    <property type="project" value="HPA"/>
</dbReference>
<dbReference type="GO" id="GO:0005654">
    <property type="term" value="C:nucleoplasm"/>
    <property type="evidence" value="ECO:0000314"/>
    <property type="project" value="HPA"/>
</dbReference>
<dbReference type="GO" id="GO:0005634">
    <property type="term" value="C:nucleus"/>
    <property type="evidence" value="ECO:0000314"/>
    <property type="project" value="UniProtKB"/>
</dbReference>
<dbReference type="GO" id="GO:0016605">
    <property type="term" value="C:PML body"/>
    <property type="evidence" value="ECO:0007669"/>
    <property type="project" value="UniProtKB-SubCell"/>
</dbReference>
<dbReference type="GO" id="GO:0003700">
    <property type="term" value="F:DNA-binding transcription factor activity"/>
    <property type="evidence" value="ECO:0000318"/>
    <property type="project" value="GO_Central"/>
</dbReference>
<dbReference type="GO" id="GO:0000981">
    <property type="term" value="F:DNA-binding transcription factor activity, RNA polymerase II-specific"/>
    <property type="evidence" value="ECO:0000247"/>
    <property type="project" value="NTNU_SB"/>
</dbReference>
<dbReference type="GO" id="GO:0001227">
    <property type="term" value="F:DNA-binding transcription repressor activity, RNA polymerase II-specific"/>
    <property type="evidence" value="ECO:0000314"/>
    <property type="project" value="NTNU_SB"/>
</dbReference>
<dbReference type="GO" id="GO:0042802">
    <property type="term" value="F:identical protein binding"/>
    <property type="evidence" value="ECO:0000353"/>
    <property type="project" value="IntAct"/>
</dbReference>
<dbReference type="GO" id="GO:0042803">
    <property type="term" value="F:protein homodimerization activity"/>
    <property type="evidence" value="ECO:0000314"/>
    <property type="project" value="UniProtKB"/>
</dbReference>
<dbReference type="GO" id="GO:0000978">
    <property type="term" value="F:RNA polymerase II cis-regulatory region sequence-specific DNA binding"/>
    <property type="evidence" value="ECO:0000314"/>
    <property type="project" value="NTNU_SB"/>
</dbReference>
<dbReference type="GO" id="GO:0043565">
    <property type="term" value="F:sequence-specific DNA binding"/>
    <property type="evidence" value="ECO:0000314"/>
    <property type="project" value="UniProtKB"/>
</dbReference>
<dbReference type="GO" id="GO:0008270">
    <property type="term" value="F:zinc ion binding"/>
    <property type="evidence" value="ECO:0000314"/>
    <property type="project" value="UniProtKB"/>
</dbReference>
<dbReference type="GO" id="GO:0006351">
    <property type="term" value="P:DNA-templated transcription"/>
    <property type="evidence" value="ECO:0000315"/>
    <property type="project" value="UniProtKB"/>
</dbReference>
<dbReference type="GO" id="GO:0001935">
    <property type="term" value="P:endothelial cell proliferation"/>
    <property type="evidence" value="ECO:0000315"/>
    <property type="project" value="UniProtKB"/>
</dbReference>
<dbReference type="GO" id="GO:0000122">
    <property type="term" value="P:negative regulation of transcription by RNA polymerase II"/>
    <property type="evidence" value="ECO:0000314"/>
    <property type="project" value="NTNU_SB"/>
</dbReference>
<dbReference type="GO" id="GO:0006355">
    <property type="term" value="P:regulation of DNA-templated transcription"/>
    <property type="evidence" value="ECO:0000315"/>
    <property type="project" value="UniProtKB"/>
</dbReference>
<dbReference type="GO" id="GO:0007346">
    <property type="term" value="P:regulation of mitotic cell cycle"/>
    <property type="evidence" value="ECO:0000315"/>
    <property type="project" value="UniProtKB"/>
</dbReference>
<dbReference type="GO" id="GO:0006357">
    <property type="term" value="P:regulation of transcription by RNA polymerase II"/>
    <property type="evidence" value="ECO:0000318"/>
    <property type="project" value="GO_Central"/>
</dbReference>
<dbReference type="Gene3D" id="6.20.210.20">
    <property type="entry name" value="THAP domain"/>
    <property type="match status" value="1"/>
</dbReference>
<dbReference type="InterPro" id="IPR026516">
    <property type="entry name" value="THAP1/10"/>
</dbReference>
<dbReference type="InterPro" id="IPR006612">
    <property type="entry name" value="THAP_Znf"/>
</dbReference>
<dbReference type="InterPro" id="IPR038441">
    <property type="entry name" value="THAP_Znf_sf"/>
</dbReference>
<dbReference type="PANTHER" id="PTHR46600">
    <property type="entry name" value="THAP DOMAIN-CONTAINING"/>
    <property type="match status" value="1"/>
</dbReference>
<dbReference type="PANTHER" id="PTHR46600:SF1">
    <property type="entry name" value="THAP DOMAIN-CONTAINING PROTEIN 1"/>
    <property type="match status" value="1"/>
</dbReference>
<dbReference type="Pfam" id="PF05485">
    <property type="entry name" value="THAP"/>
    <property type="match status" value="1"/>
</dbReference>
<dbReference type="SMART" id="SM00692">
    <property type="entry name" value="DM3"/>
    <property type="match status" value="1"/>
</dbReference>
<dbReference type="SMART" id="SM00980">
    <property type="entry name" value="THAP"/>
    <property type="match status" value="1"/>
</dbReference>
<dbReference type="SUPFAM" id="SSF57716">
    <property type="entry name" value="Glucocorticoid receptor-like (DNA-binding domain)"/>
    <property type="match status" value="1"/>
</dbReference>
<dbReference type="PROSITE" id="PS50950">
    <property type="entry name" value="ZF_THAP"/>
    <property type="match status" value="1"/>
</dbReference>
<keyword id="KW-0002">3D-structure</keyword>
<keyword id="KW-0025">Alternative splicing</keyword>
<keyword id="KW-0131">Cell cycle</keyword>
<keyword id="KW-0175">Coiled coil</keyword>
<keyword id="KW-0225">Disease variant</keyword>
<keyword id="KW-0238">DNA-binding</keyword>
<keyword id="KW-1023">Dystonia</keyword>
<keyword id="KW-0479">Metal-binding</keyword>
<keyword id="KW-0539">Nucleus</keyword>
<keyword id="KW-1267">Proteomics identification</keyword>
<keyword id="KW-1185">Reference proteome</keyword>
<keyword id="KW-0804">Transcription</keyword>
<keyword id="KW-0805">Transcription regulation</keyword>
<keyword id="KW-0862">Zinc</keyword>
<keyword id="KW-0863">Zinc-finger</keyword>
<organism>
    <name type="scientific">Homo sapiens</name>
    <name type="common">Human</name>
    <dbReference type="NCBI Taxonomy" id="9606"/>
    <lineage>
        <taxon>Eukaryota</taxon>
        <taxon>Metazoa</taxon>
        <taxon>Chordata</taxon>
        <taxon>Craniata</taxon>
        <taxon>Vertebrata</taxon>
        <taxon>Euteleostomi</taxon>
        <taxon>Mammalia</taxon>
        <taxon>Eutheria</taxon>
        <taxon>Euarchontoglires</taxon>
        <taxon>Primates</taxon>
        <taxon>Haplorrhini</taxon>
        <taxon>Catarrhini</taxon>
        <taxon>Hominidae</taxon>
        <taxon>Homo</taxon>
    </lineage>
</organism>
<evidence type="ECO:0000255" key="1"/>
<evidence type="ECO:0000255" key="2">
    <source>
        <dbReference type="PROSITE-ProRule" id="PRU00309"/>
    </source>
</evidence>
<evidence type="ECO:0000269" key="3">
    <source>
    </source>
</evidence>
<evidence type="ECO:0000269" key="4">
    <source>
    </source>
</evidence>
<evidence type="ECO:0000269" key="5">
    <source>
    </source>
</evidence>
<evidence type="ECO:0000269" key="6">
    <source>
    </source>
</evidence>
<evidence type="ECO:0000269" key="7">
    <source>
    </source>
</evidence>
<evidence type="ECO:0000269" key="8">
    <source>
    </source>
</evidence>
<evidence type="ECO:0000269" key="9">
    <source>
    </source>
</evidence>
<evidence type="ECO:0000269" key="10">
    <source>
    </source>
</evidence>
<evidence type="ECO:0000269" key="11">
    <source>
    </source>
</evidence>
<evidence type="ECO:0000269" key="12">
    <source>
    </source>
</evidence>
<evidence type="ECO:0000269" key="13">
    <source>
    </source>
</evidence>
<evidence type="ECO:0000269" key="14">
    <source>
    </source>
</evidence>
<evidence type="ECO:0000269" key="15">
    <source>
    </source>
</evidence>
<evidence type="ECO:0000269" key="16">
    <source>
    </source>
</evidence>
<evidence type="ECO:0000269" key="17">
    <source>
    </source>
</evidence>
<evidence type="ECO:0000269" key="18">
    <source>
    </source>
</evidence>
<evidence type="ECO:0000269" key="19">
    <source>
    </source>
</evidence>
<evidence type="ECO:0000269" key="20">
    <source>
    </source>
</evidence>
<evidence type="ECO:0000269" key="21">
    <source>
    </source>
</evidence>
<evidence type="ECO:0000269" key="22">
    <source>
    </source>
</evidence>
<evidence type="ECO:0000269" key="23">
    <source>
    </source>
</evidence>
<evidence type="ECO:0000269" key="24">
    <source>
    </source>
</evidence>
<evidence type="ECO:0000269" key="25">
    <source>
    </source>
</evidence>
<evidence type="ECO:0000269" key="26">
    <source>
    </source>
</evidence>
<evidence type="ECO:0000269" key="27">
    <source>
    </source>
</evidence>
<evidence type="ECO:0000269" key="28">
    <source ref="3"/>
</evidence>
<evidence type="ECO:0000303" key="29">
    <source>
    </source>
</evidence>
<evidence type="ECO:0000305" key="30"/>
<evidence type="ECO:0007829" key="31">
    <source>
        <dbReference type="PDB" id="2JTG"/>
    </source>
</evidence>
<evidence type="ECO:0007829" key="32">
    <source>
        <dbReference type="PDB" id="2KO0"/>
    </source>
</evidence>
<name>THAP1_HUMAN</name>
<sequence length="213" mass="24944">MVQSCSAYGCKNRYDKDKPVSFHKFPLTRPSLCKEWEAAVRRKNFKPTKYSSICSEHFTPDCFKRECNNKLLKENAVPTIFLCTEPHDKKEDLLEPQEQLPPPPLPPPVSQVDAAIGLLMPPLQTPVNLSVFCDHNYTVEDTMHQRKRIHQLEQQVEKLRKKLKTAQQRCRRQERQLEKLKEVVHFQKEKDDVSERGYVILPNDYFEIVEVPA</sequence>
<feature type="chain" id="PRO_0000068637" description="THAP domain-containing protein 1">
    <location>
        <begin position="1"/>
        <end position="213"/>
    </location>
</feature>
<feature type="zinc finger region" description="THAP-type" evidence="2">
    <location>
        <begin position="1"/>
        <end position="81"/>
    </location>
</feature>
<feature type="region of interest" description="Involved in homodimer formation" evidence="27">
    <location>
        <begin position="139"/>
        <end position="185"/>
    </location>
</feature>
<feature type="coiled-coil region" evidence="1">
    <location>
        <begin position="139"/>
        <end position="190"/>
    </location>
</feature>
<feature type="short sequence motif" description="HCFC1-binding motif (HBM)">
    <location>
        <begin position="134"/>
        <end position="137"/>
    </location>
</feature>
<feature type="splice variant" id="VSP_044665" description="In isoform 2." evidence="29">
    <original>FPLTRPSLCKEWEAAVRRKNFKPTKYSSI</original>
    <variation>KKIFWSHRNSFPHLLYRLLFPRLMLLLDY</variation>
    <location>
        <begin position="25"/>
        <end position="53"/>
    </location>
</feature>
<feature type="splice variant" id="VSP_044666" description="In isoform 2." evidence="29">
    <location>
        <begin position="54"/>
        <end position="213"/>
    </location>
</feature>
<feature type="sequence variant" id="VAR_066677" description="In DYT6." evidence="14">
    <original>S</original>
    <variation>F</variation>
    <location>
        <position position="6"/>
    </location>
</feature>
<feature type="sequence variant" id="VAR_066678" description="In DYT6; dbSNP:rs1586459410." evidence="19">
    <original>S</original>
    <variation>P</variation>
    <location>
        <position position="6"/>
    </location>
</feature>
<feature type="sequence variant" id="VAR_067356" description="In DYT6." evidence="25">
    <original>A</original>
    <variation>D</variation>
    <location>
        <position position="7"/>
    </location>
</feature>
<feature type="sequence variant" id="VAR_066679" description="In DYT6." evidence="14">
    <original>Y</original>
    <variation>C</variation>
    <location>
        <position position="8"/>
    </location>
</feature>
<feature type="sequence variant" id="VAR_066680" description="In DYT6; dbSNP:rs267607112." evidence="11">
    <original>G</original>
    <variation>C</variation>
    <location>
        <position position="9"/>
    </location>
</feature>
<feature type="sequence variant" id="VAR_065880" description="In DYT6." evidence="8">
    <original>N</original>
    <variation>K</variation>
    <location>
        <position position="12"/>
    </location>
</feature>
<feature type="sequence variant" id="VAR_066681" description="In DYT6." evidence="24">
    <original>R</original>
    <variation>H</variation>
    <location>
        <position position="13"/>
    </location>
</feature>
<feature type="sequence variant" id="VAR_066682" description="In DYT6; lower activity than wild-type." evidence="24 25">
    <original>K</original>
    <variation>E</variation>
    <location>
        <position position="16"/>
    </location>
</feature>
<feature type="sequence variant" id="VAR_066683" description="In DYT6; dbSNP:rs766483829." evidence="11">
    <original>D</original>
    <variation>G</variation>
    <location>
        <position position="17"/>
    </location>
</feature>
<feature type="sequence variant" id="VAR_067357" description="In DYT6." evidence="25">
    <original>S</original>
    <variation>C</variation>
    <location>
        <position position="21"/>
    </location>
</feature>
<feature type="sequence variant" id="VAR_065881" description="In DYT6." evidence="8">
    <original>S</original>
    <variation>T</variation>
    <location>
        <position position="21"/>
    </location>
</feature>
<feature type="sequence variant" id="VAR_066684" description="In DYT6; lower activity than wild-type; dbSNP:rs387907177." evidence="24">
    <original>H</original>
    <variation>P</variation>
    <location>
        <position position="23"/>
    </location>
</feature>
<feature type="sequence variant" id="VAR_066685" description="In DYT6; lower activity than wild-type; dbSNP:rs387907176." evidence="24">
    <original>K</original>
    <variation>E</variation>
    <location>
        <position position="24"/>
    </location>
</feature>
<feature type="sequence variant" id="VAR_066686" description="In DYT6; lower activity than wild-type; dbSNP:rs1802674870." evidence="24">
    <original>P</original>
    <variation>L</variation>
    <location>
        <position position="26"/>
    </location>
</feature>
<feature type="sequence variant" id="VAR_066687" description="In DYT6." evidence="14">
    <original>P</original>
    <variation>R</variation>
    <location>
        <position position="26"/>
    </location>
</feature>
<feature type="sequence variant" id="VAR_065882" description="In DYT6; dbSNP:rs767952378." evidence="8">
    <original>R</original>
    <variation>P</variation>
    <location>
        <position position="29"/>
    </location>
</feature>
<feature type="sequence variant" id="VAR_066688" description="In DYT6; dbSNP:rs767952378." evidence="9 25">
    <original>R</original>
    <variation>Q</variation>
    <location>
        <position position="29"/>
    </location>
</feature>
<feature type="sequence variant" id="VAR_066689" description="In DYT6." evidence="21">
    <original>P</original>
    <variation>R</variation>
    <location>
        <position position="30"/>
    </location>
</feature>
<feature type="sequence variant" id="VAR_066690" description="In DYT6; lower activity than wild-type." evidence="20">
    <original>L</original>
    <variation>H</variation>
    <location>
        <position position="32"/>
    </location>
</feature>
<feature type="sequence variant" id="VAR_065883" description="In DYT6." evidence="8">
    <original>A</original>
    <variation>T</variation>
    <location>
        <position position="39"/>
    </location>
</feature>
<feature type="sequence variant" id="VAR_066691" description="In DYT6." evidence="22">
    <original>C</original>
    <variation>F</variation>
    <location>
        <position position="54"/>
    </location>
</feature>
<feature type="sequence variant" id="VAR_072272" description="In DYT6." evidence="26">
    <original>E</original>
    <variation>G</variation>
    <location>
        <position position="56"/>
    </location>
</feature>
<feature type="sequence variant" id="VAR_066692" description="In DYT6." evidence="16">
    <original>H</original>
    <variation>N</variation>
    <location>
        <position position="57"/>
    </location>
</feature>
<feature type="sequence variant" id="VAR_065884" description="In DYT6." evidence="17">
    <original>T</original>
    <variation>I</variation>
    <location>
        <position position="59"/>
    </location>
</feature>
<feature type="sequence variant" id="VAR_066693" description="In DYT6." evidence="17 19">
    <location>
        <position position="69"/>
    </location>
</feature>
<feature type="sequence variant" id="VAR_066694" description="In DYT6." evidence="19">
    <original>L</original>
    <variation>R</variation>
    <location>
        <position position="72"/>
    </location>
</feature>
<feature type="sequence variant" id="VAR_066695" description="In DYT6." evidence="18 22">
    <original>N</original>
    <variation>I</variation>
    <location>
        <position position="75"/>
    </location>
</feature>
<feature type="sequence variant" id="VAR_066696" description="In DYT6; mild phenotype; does not affect activity; dbSNP:rs372080941." evidence="24 25">
    <original>I</original>
    <variation>V</variation>
    <location>
        <position position="80"/>
    </location>
</feature>
<feature type="sequence variant" id="VAR_054788" description="In DYT6; affects DNA-binding; dbSNP:rs118204013." evidence="7 8">
    <original>F</original>
    <variation>L</variation>
    <location>
        <position position="81"/>
    </location>
</feature>
<feature type="sequence variant" id="VAR_066697" description="In DYT6; dbSNP:rs768017019." evidence="16">
    <original>C</original>
    <variation>R</variation>
    <location>
        <position position="83"/>
    </location>
</feature>
<feature type="sequence variant" id="VAR_065885" description="In DYT6; dbSNP:rs267607111." evidence="8 28">
    <original>K</original>
    <variation>R</variation>
    <location>
        <position position="89"/>
    </location>
</feature>
<feature type="sequence variant" id="VAR_066698" description="In DYT6; dbSNP:rs950435041." evidence="11">
    <original>F</original>
    <variation>S</variation>
    <location>
        <position position="132"/>
    </location>
</feature>
<feature type="sequence variant" id="VAR_065886" description="In DYT6." evidence="17">
    <original>N</original>
    <variation>K</variation>
    <location>
        <position position="136"/>
    </location>
</feature>
<feature type="sequence variant" id="VAR_066699" description="In DYT6; dbSNP:rs769988455." evidence="14">
    <original>N</original>
    <variation>S</variation>
    <location>
        <position position="136"/>
    </location>
</feature>
<feature type="sequence variant" id="VAR_066700" description="In DYT6; dbSNP:rs1802650621." evidence="16">
    <original>Y</original>
    <variation>C</variation>
    <location>
        <position position="137"/>
    </location>
</feature>
<feature type="sequence variant" id="VAR_066701" description="In DYT6; no effect on dimerization; dbSNP:rs374512193." evidence="16 27">
    <original>M</original>
    <variation>V</variation>
    <location>
        <position position="143"/>
    </location>
</feature>
<feature type="sequence variant" id="VAR_066702" description="In DYT6; no effect on dimerization." evidence="11 15 27">
    <original>I</original>
    <variation>T</variation>
    <location>
        <position position="149"/>
    </location>
</feature>
<feature type="sequence variant" id="VAR_066703" description="In DYT6; no effect on dimerization." evidence="18 22 27">
    <original>H</original>
    <variation>P</variation>
    <location>
        <position position="150"/>
    </location>
</feature>
<feature type="sequence variant" id="VAR_066704" description="In DYT6; no effect on dimerization; dbSNP:rs138918468." evidence="11 27">
    <original>A</original>
    <variation>T</variation>
    <location>
        <position position="166"/>
    </location>
</feature>
<feature type="sequence variant" id="VAR_066705" description="In DYT6; no effect on dimerization; dbSNP:rs767519301." evidence="14 27">
    <original>R</original>
    <variation>Q</variation>
    <location>
        <position position="169"/>
    </location>
</feature>
<feature type="sequence variant" id="VAR_065887" description="In DYT6; no effect on dimerization." evidence="10 27">
    <original>C</original>
    <variation>R</variation>
    <location>
        <position position="170"/>
    </location>
</feature>
<feature type="sequence variant" id="VAR_066706" description="In DYT6; no effect on dimerization; dbSNP:rs759392096." evidence="23 27">
    <original>E</original>
    <variation>G</variation>
    <location>
        <position position="174"/>
    </location>
</feature>
<feature type="sequence variant" id="VAR_079366" description="In DYT6; no effect on dimerization." evidence="27">
    <original>L</original>
    <variation>P</variation>
    <location>
        <position position="177"/>
    </location>
</feature>
<feature type="sequence variant" id="VAR_066707" description="In DYT6; no effect on dimerization." evidence="22 27">
    <original>L</original>
    <variation>S</variation>
    <location>
        <position position="180"/>
    </location>
</feature>
<feature type="sequence variant" id="VAR_066708" description="In DYT6." evidence="11">
    <original>Q</original>
    <variation>K</variation>
    <location>
        <position position="187"/>
    </location>
</feature>
<feature type="sequence variant" id="VAR_066709" description="In DYT6; dbSNP:rs377725442." evidence="16">
    <original>D</original>
    <variation>N</variation>
    <location>
        <position position="192"/>
    </location>
</feature>
<feature type="mutagenesis site" description="Does not affect DNA-binding." evidence="6">
    <original>S</original>
    <variation>A</variation>
    <location>
        <position position="4"/>
    </location>
</feature>
<feature type="mutagenesis site" description="Abolishes DNA- and zinc-binding." evidence="4 6">
    <original>C</original>
    <variation>A</variation>
    <location>
        <position position="5"/>
    </location>
</feature>
<feature type="mutagenesis site" description="Does not affect DNA-binding." evidence="6">
    <original>S</original>
    <variation>A</variation>
    <location>
        <position position="6"/>
    </location>
</feature>
<feature type="mutagenesis site" description="Does not affect DNA-binding." evidence="6">
    <original>Y</original>
    <variation>A</variation>
    <location>
        <position position="8"/>
    </location>
</feature>
<feature type="mutagenesis site" description="Abolishes DNA- and zinc-binding." evidence="4 6">
    <original>C</original>
    <variation>A</variation>
    <location>
        <position position="10"/>
    </location>
</feature>
<feature type="mutagenesis site" description="Partially affects DNA-binding." evidence="6">
    <original>K</original>
    <variation>A</variation>
    <location>
        <position position="11"/>
    </location>
</feature>
<feature type="mutagenesis site" description="Does not affect DNA-binding." evidence="6">
    <original>K</original>
    <variation>A</variation>
    <location>
        <position position="16"/>
    </location>
</feature>
<feature type="mutagenesis site" description="Strongly affects DNA-binding." evidence="6">
    <original>K</original>
    <variation>A</variation>
    <location>
        <position position="24"/>
    </location>
</feature>
<feature type="mutagenesis site" description="Abolishes DNA- and zinc-binding." evidence="4 6">
    <original>P</original>
    <variation>A</variation>
    <location>
        <position position="26"/>
    </location>
</feature>
<feature type="mutagenesis site" description="Partially affects DNA-binding." evidence="6">
    <original>L</original>
    <variation>A</variation>
    <location>
        <position position="27"/>
    </location>
</feature>
<feature type="mutagenesis site" description="Strongly affects DNA-binding.">
    <original>TRP</original>
    <variation>AAA</variation>
    <location>
        <begin position="28"/>
        <end position="30"/>
    </location>
</feature>
<feature type="mutagenesis site" description="Does not affect DNA-binding." evidence="6">
    <original>T</original>
    <variation>A</variation>
    <location>
        <position position="28"/>
    </location>
</feature>
<feature type="mutagenesis site" description="Strongly affects DNA-binding." evidence="6">
    <original>R</original>
    <variation>A</variation>
    <location>
        <position position="29"/>
    </location>
</feature>
<feature type="mutagenesis site" description="Does not affect DNA-binding." evidence="6">
    <original>P</original>
    <variation>A</variation>
    <location>
        <position position="30"/>
    </location>
</feature>
<feature type="mutagenesis site" description="Does not affect DNA-binding." evidence="6">
    <original>S</original>
    <variation>A</variation>
    <location>
        <position position="31"/>
    </location>
</feature>
<feature type="mutagenesis site" description="Does not affect DNA-binding." evidence="6">
    <original>L</original>
    <variation>A</variation>
    <location>
        <position position="32"/>
    </location>
</feature>
<feature type="mutagenesis site" description="Does not affect DNA-binding." evidence="6">
    <original>C</original>
    <variation>A</variation>
    <location>
        <position position="33"/>
    </location>
</feature>
<feature type="mutagenesis site" description="Does not affect DNA-binding." evidence="6">
    <original>K</original>
    <variation>A</variation>
    <location>
        <position position="34"/>
    </location>
</feature>
<feature type="mutagenesis site" description="Does not affect DNA-binding." evidence="6">
    <original>E</original>
    <variation>A</variation>
    <location>
        <position position="35"/>
    </location>
</feature>
<feature type="mutagenesis site" description="Abolishes DNA- and zinc-binding." evidence="4 6">
    <original>W</original>
    <variation>A</variation>
    <location>
        <position position="36"/>
    </location>
</feature>
<feature type="mutagenesis site" description="Partially affects DNA-binding." evidence="6">
    <original>E</original>
    <variation>A</variation>
    <location>
        <position position="37"/>
    </location>
</feature>
<feature type="mutagenesis site" description="Partially affects DNA-binding." evidence="6">
    <original>V</original>
    <variation>A</variation>
    <location>
        <position position="40"/>
    </location>
</feature>
<feature type="mutagenesis site" description="Strongly affects DNA-binding.">
    <original>RRK</original>
    <variation>AAA</variation>
    <location>
        <begin position="41"/>
        <end position="43"/>
    </location>
</feature>
<feature type="mutagenesis site" description="Does not affect DNA-binding." evidence="6">
    <original>R</original>
    <variation>A</variation>
    <location>
        <position position="41"/>
    </location>
</feature>
<feature type="mutagenesis site" description="Strongly affects DNA-binding." evidence="6">
    <original>R</original>
    <variation>A</variation>
    <location>
        <position position="42"/>
    </location>
</feature>
<feature type="mutagenesis site" description="Does not affect DNA-binding." evidence="6">
    <original>K</original>
    <variation>A</variation>
    <location>
        <position position="43"/>
    </location>
</feature>
<feature type="mutagenesis site" description="Does not affect DNA-binding." evidence="6">
    <original>N</original>
    <variation>A</variation>
    <location>
        <position position="44"/>
    </location>
</feature>
<feature type="mutagenesis site" description="Strongly affects DNA-binding." evidence="6">
    <original>F</original>
    <variation>A</variation>
    <location>
        <position position="45"/>
    </location>
</feature>
<feature type="mutagenesis site" description="Does not affect DNA-binding." evidence="6">
    <original>K</original>
    <variation>A</variation>
    <location>
        <position position="46"/>
    </location>
</feature>
<feature type="mutagenesis site" description="Strongly affects DNA-binding.">
    <original>PTK</original>
    <variation>AAA</variation>
    <location>
        <begin position="47"/>
        <end position="49"/>
    </location>
</feature>
<feature type="mutagenesis site" description="Does not affect DNA-binding." evidence="6">
    <original>P</original>
    <variation>A</variation>
    <location>
        <position position="47"/>
    </location>
</feature>
<feature type="mutagenesis site" description="Strongly affects DNA-binding." evidence="6">
    <original>T</original>
    <variation>A</variation>
    <location>
        <position position="48"/>
    </location>
</feature>
<feature type="mutagenesis site" description="Does not affect DNA-binding.">
    <original>K</original>
    <variation>A</variation>
    <location>
        <position position="49"/>
    </location>
</feature>
<feature type="mutagenesis site" description="Strongly affects DNA-binding.">
    <original>YSS</original>
    <variation>AAA</variation>
    <location>
        <begin position="50"/>
        <end position="52"/>
    </location>
</feature>
<feature type="mutagenesis site" description="Partially affects DNA-binding." evidence="6">
    <original>Y</original>
    <variation>A</variation>
    <location>
        <position position="50"/>
    </location>
</feature>
<feature type="mutagenesis site" description="Does not affect DNA-binding." evidence="6">
    <original>S</original>
    <variation>A</variation>
    <location>
        <position position="51"/>
    </location>
</feature>
<feature type="mutagenesis site" description="Does not affect DNA-binding." evidence="6">
    <original>S</original>
    <variation>A</variation>
    <location>
        <position position="52"/>
    </location>
</feature>
<feature type="mutagenesis site" description="Abolishes DNA- and zinc-binding." evidence="4 6">
    <original>C</original>
    <variation>A</variation>
    <location>
        <position position="54"/>
    </location>
</feature>
<feature type="mutagenesis site" description="Does not affect DNA-binding." evidence="6">
    <original>S</original>
    <variation>A</variation>
    <location>
        <position position="55"/>
    </location>
</feature>
<feature type="mutagenesis site" description="Abolishes DNA- and zinc-binding." evidence="4 6">
    <original>H</original>
    <variation>A</variation>
    <location>
        <position position="57"/>
    </location>
</feature>
<feature type="mutagenesis site" description="Abolishes DNA- and zinc-binding." evidence="4 6">
    <original>F</original>
    <variation>A</variation>
    <location>
        <position position="58"/>
    </location>
</feature>
<feature type="mutagenesis site" description="Abolishes DNA- and zinc-binding." evidence="4 6">
    <original>P</original>
    <variation>A</variation>
    <location>
        <position position="78"/>
    </location>
</feature>
<feature type="sequence conflict" description="In Ref. 2; CAG33537." evidence="30" ref="2">
    <original>R</original>
    <variation>G</variation>
    <location>
        <position position="171"/>
    </location>
</feature>
<feature type="sequence conflict" description="In Ref. 3; BAD96951." evidence="30" ref="3">
    <original>A</original>
    <variation>T</variation>
    <location>
        <position position="213"/>
    </location>
</feature>
<feature type="strand" evidence="32">
    <location>
        <begin position="6"/>
        <end position="9"/>
    </location>
</feature>
<feature type="strand" evidence="31">
    <location>
        <begin position="16"/>
        <end position="18"/>
    </location>
</feature>
<feature type="strand" evidence="31">
    <location>
        <begin position="22"/>
        <end position="24"/>
    </location>
</feature>
<feature type="helix" evidence="31">
    <location>
        <begin position="33"/>
        <end position="40"/>
    </location>
</feature>
<feature type="strand" evidence="32">
    <location>
        <begin position="42"/>
        <end position="44"/>
    </location>
</feature>
<feature type="turn" evidence="31">
    <location>
        <begin position="47"/>
        <end position="49"/>
    </location>
</feature>
<feature type="strand" evidence="31">
    <location>
        <begin position="51"/>
        <end position="54"/>
    </location>
</feature>
<feature type="helix" evidence="31">
    <location>
        <begin position="55"/>
        <end position="57"/>
    </location>
</feature>
<feature type="helix" evidence="31">
    <location>
        <begin position="60"/>
        <end position="63"/>
    </location>
</feature>
<feature type="strand" evidence="32">
    <location>
        <begin position="67"/>
        <end position="71"/>
    </location>
</feature>
<feature type="helix" evidence="31">
    <location>
        <begin position="79"/>
        <end position="81"/>
    </location>
</feature>